<keyword id="KW-0002">3D-structure</keyword>
<keyword id="KW-0007">Acetylation</keyword>
<keyword id="KW-0010">Activator</keyword>
<keyword id="KW-0130">Cell adhesion</keyword>
<keyword id="KW-0965">Cell junction</keyword>
<keyword id="KW-1003">Cell membrane</keyword>
<keyword id="KW-0966">Cell projection</keyword>
<keyword id="KW-0963">Cytoplasm</keyword>
<keyword id="KW-0206">Cytoskeleton</keyword>
<keyword id="KW-0325">Glycoprotein</keyword>
<keyword id="KW-0472">Membrane</keyword>
<keyword id="KW-0524">Neurogenesis</keyword>
<keyword id="KW-0539">Nucleus</keyword>
<keyword id="KW-0597">Phosphoprotein</keyword>
<keyword id="KW-1185">Reference proteome</keyword>
<keyword id="KW-0677">Repeat</keyword>
<keyword id="KW-0702">S-nitrosylation</keyword>
<keyword id="KW-0770">Synapse</keyword>
<keyword id="KW-0804">Transcription</keyword>
<keyword id="KW-0805">Transcription regulation</keyword>
<keyword id="KW-0832">Ubl conjugation</keyword>
<keyword id="KW-0879">Wnt signaling pathway</keyword>
<proteinExistence type="evidence at protein level"/>
<comment type="function">
    <text evidence="3 18 19 24 32 38">Key downstream component of the canonical Wnt signaling pathway (PubMed:15132997). In the absence of Wnt, forms a complex with AXIN1, AXIN2, APC, CSNK1A1 and GSK3B that promotes phosphorylation on N-terminal Ser and Thr residues and ubiquitination of CTNNB1 via BTRC and its subsequent degradation by the proteasome. In the presence of Wnt ligand, CTNNB1 is not ubiquitinated and accumulates in the nucleus, where it acts as a coactivator for transcription factors of the TCF/LEF family, leading to activate Wnt responsive genes (By similarity). Also acts as a coactivator for other transcription factors, such as NR5A2 (By similarity). Promotes epithelial to mesenchymal transition/mesenchymal to epithelial transition (EMT/MET) via driving transcription of CTNNB1/TCF-target genes (By similarity). Involved in the regulation of cell adhesion, as component of an E-cadherin:catenin adhesion complex (PubMed:16325582, PubMed:18093941). Acts as a negative regulator of centrosome cohesion. Involved in the CDK2/PTPN6/CTNNB1/CEACAM1 pathway of insulin internalization. Blocks anoikis of malignant kidney and intestinal epithelial cells and promotes their anchorage-independent growth by down-regulating DAPK2. Disrupts PML function and PML-NB formation by inhibiting RANBP2-mediated sumoylation of PML (By similarity). Promotes neurogenesis by maintaining sympathetic neuroblasts within the cell cycle (PubMed:21325504). Involved in chondrocyte differentiation via interaction with SOX9: SOX9-binding competes with the binding sites of TCF/LEF within CTNNB1, thereby inhibiting the Wnt signaling (PubMed:15132997). Acts as a positive regulator of odontoblast differentiation during mesenchymal tooth germ formation, via promoting the transcription of differentiation factors such as LEF1, BMP2 and BMP4 (PubMed:29148101). Activity is repressed in a MSX1-mediated manner at the bell stage of mesenchymal tooth germ formation which prevents premature differentiation of odontoblasts (PubMed:29148101).</text>
</comment>
<comment type="subunit">
    <text evidence="3 6 7 8 9 10 11 12 15 16 17 18 20 21 22 23 25 26 27 30 35 40 41 42 43">Two separate complex-associated pools are found in the cytoplasm. The majority is present as component of an E-cadherin/ catenin adhesion complex composed of at least E-cadherin/CDH1 and beta-catenin/CTNNB1, and possibly alpha-catenin/CTNNA1; the complex is located to adherens junctions. The stable association of CTNNA1 is controversial as CTNNA1 was shown not to bind to F-actin when assembled in the complex. Alternatively, the CTNNA1-containing complex may be linked to F-actin by other proteins such as LIMA1. Binds NHERF1. Interacts with PTPRU (via the cytoplasmic juxtamembrane domain) and with EMD. Interacts with SESTD1 and TRPC4. Interacts with CAV1. Interacts with PTPRJ. Interacts with PKT7. Interacts with FAT1 (via the cytoplasmic domain). Interacts with CDK2, NDRG2 and NANOS1. Interacts with NEK2 and CDK5. Interacts with CARM1, CXADR, PCDH11Y and PTK6. Interacts with RAPGEF2. Interacts with SOX7; this interaction may lead to proteasomal degradation of active CTNNB1 and thus inhibition of Wnt/beta-catenin-stimulated transcription. Identified in a complex with HINT1 and MITF. Interacts with FHIT. Interacts with FERMT2. Identified in a complex with TCF4 and FERMT2. Another cytoplasmic pool is part of a large complex containing AXIN1, AXIN2, APC, CSNK1A1 and GSK3B that promotes phosphorylation on N-terminal Ser and Thr residues and ubiquitination of CTNNB1 via BTRC and its subsequent degradation by the proteasome. Wnt-dependent activation of DVL antagonizes the action of GSK3B. When GSK3B activity is inhibited the complex dissociates, CTNNB1 is dephosphorylated and is no longer targeted for destruction. The stabilized protein translocates to the nucleus, where it binds TCF/LEF-1 family members, BCL9, BCL9L and possibly also RUVBL1 and CHD8. Interacts with TAX1BP3 (via the PDZ domain); this interaction inhibits the transcriptional activity of CTNNB1. Interacts with AJAP1, BAIAP1 and CTNNA3. Interacts with TRPV4; the TRPV4 and CTNNB1 complex can interact with CDH1. Interacts with VCL. The CTNNB1 and TCF4 complex interacts with PML. Interacts with XIRP1. Binds CTNNBIP and EP300. CTNNB1 forms a ternary complex with LEF1 and EP300 that is disrupted by CTNNBIP1 binding. Interacts directly with AXIN1; the interaction is regulated by CDK2 phosphorylation of AXIN1. Interacts with GLIS2. Interacts with SCRIB. Interacts with TNIK and TCF7L2. Interacts with SLC30A9. Interacts with RORA. May interact with P-cadherin/CDH3. Interacts with RNF220 (By similarity). Interacts with CTNND2 (By similarity). Interacts (via the C-terminal region) with CBY1 (By similarity). The complex composed, at least, of APC, CTNNB1 and GSK3B interacts with JPT1; the interaction requires the inactive form of GSK3B (phosphorylated at 'Ser-9') (By similarity). Interacts with DLG5 (PubMed:25232112). Interacts with FAM53B; promoting translocation to the nucleus. Interacts with TMEM170B (By similarity). Interacts with AHI1 (By similarity). Interacts with GID8 (By similarity). Component of an cadherin:catenin adhesion complex composed of at least of CDH26, beta-catenin/CTNNB1, alpha-catenin/CTNNA1 and p120 catenin/CTNND1 (By similarity). Forms a complex comprising APPL1, RUVBL2, APPL2, HDAC1 and HDAC2 (By similarity). Interacts with IRF2BPL; mediates the ubiquitination and degradation of CTNNB1 (By similarity). Interacts with AMFR (PubMed:31073040). Interacts with LMBR1L (PubMed:31073040). Interacts with SOX30; prevents interaction of CTNNB1 with TCF7L2/TCF4 and leads to inhibition of Wnt signaling (By similarity). Interacts with SOX9; inhibiting CTNNB1 activity by competing with the binding sites of TCF/LEF within CTNNB1, thereby inhibiting the Wnt signaling (PubMed:15132997). Interacts with SPN/CD43 cytoplasmic tail (By similarity). Interacts (when phosphorylated at Tyr-333) with isoform M2 of PKM (PKM2); promoting transcription activation (By similarity). Interacts with PKP2 (via HEAD domain) (By similarity). Interacts with CDH1 (By similarity). Interacts (when unphosphorylated) with FLYWCH1, perhaps preventing interaction of CTNNB1 with TCF4, and thereby regulating transcription activation; phosphorylation of CTNNB1 may inhibit the interaction (By similarity). Interacts (via the central armadillo domains) with probable transcriptional regulator ADNP (via N-terminal region); interaction is direct and stabilizes CTNNB1 by modulating its phosphorylation by glycogen synthase kinase-3 beta GSK3B (PubMed:32533114). Interacts with NR5A2 (By similarity). Interacts with DSG2; the interaction promotes localization of CTNNB1 at cell junctions thus reducing its nuclear localization and subsequent transcription of CTNNB1/TCF-target genes (By similarity).</text>
</comment>
<comment type="interaction">
    <interactant intactId="EBI-397872">
        <id>Q02248</id>
    </interactant>
    <interactant intactId="EBI-984420">
        <id>P09803</id>
        <label>Cdh1</label>
    </interactant>
    <organismsDiffer>false</organismsDiffer>
    <experiments>17</experiments>
</comment>
<comment type="interaction">
    <interactant intactId="EBI-397872">
        <id>Q02248</id>
    </interactant>
    <interactant intactId="EBI-296306">
        <id>P45481</id>
        <label>Crebbp</label>
    </interactant>
    <organismsDiffer>false</organismsDiffer>
    <experiments>3</experiments>
</comment>
<comment type="interaction">
    <interactant intactId="EBI-397872">
        <id>Q02248</id>
    </interactant>
    <interactant intactId="EBI-647895">
        <id>P26231</id>
        <label>Ctnna1</label>
    </interactant>
    <organismsDiffer>false</organismsDiffer>
    <experiments>2</experiments>
</comment>
<comment type="interaction">
    <interactant intactId="EBI-397872">
        <id>Q02248</id>
    </interactant>
    <interactant intactId="EBI-400793">
        <id>Q9WV60</id>
        <label>Gsk3b</label>
    </interactant>
    <organismsDiffer>false</organismsDiffer>
    <experiments>2</experiments>
</comment>
<comment type="interaction">
    <interactant intactId="EBI-397872">
        <id>Q02248</id>
    </interactant>
    <interactant intactId="EBI-5327353">
        <id>P42859</id>
        <label>Htt</label>
    </interactant>
    <organismsDiffer>false</organismsDiffer>
    <experiments>3</experiments>
</comment>
<comment type="interaction">
    <interactant intactId="EBI-397872">
        <id>Q02248</id>
    </interactant>
    <interactant intactId="EBI-984464">
        <id>P27782</id>
        <label>Lef1</label>
    </interactant>
    <organismsDiffer>false</organismsDiffer>
    <experiments>6</experiments>
</comment>
<comment type="interaction">
    <interactant intactId="EBI-397872">
        <id>Q02248</id>
    </interactant>
    <interactant intactId="EBI-8459555">
        <id>O54826</id>
        <label>Mllt10</label>
    </interactant>
    <organismsDiffer>false</organismsDiffer>
    <experiments>2</experiments>
</comment>
<comment type="interaction">
    <interactant intactId="EBI-397872">
        <id>Q02248</id>
    </interactant>
    <interactant intactId="EBI-937831">
        <id>P97458</id>
        <label>Prop1</label>
    </interactant>
    <organismsDiffer>false</organismsDiffer>
    <experiments>2</experiments>
</comment>
<comment type="interaction">
    <interactant intactId="EBI-397872">
        <id>Q02248</id>
    </interactant>
    <interactant intactId="EBI-644400">
        <id>Q04207</id>
        <label>Rela</label>
    </interactant>
    <organismsDiffer>false</organismsDiffer>
    <experiments>5</experiments>
</comment>
<comment type="interaction">
    <interactant intactId="EBI-397872">
        <id>Q02248</id>
    </interactant>
    <interactant intactId="EBI-3505685">
        <id>P40645</id>
        <label>Sox6</label>
    </interactant>
    <organismsDiffer>false</organismsDiffer>
    <experiments>2</experiments>
</comment>
<comment type="interaction">
    <interactant intactId="EBI-397872">
        <id>Q02248</id>
    </interactant>
    <interactant intactId="EBI-1161647">
        <id>Q9DBG9</id>
        <label>Tax1bp3</label>
    </interactant>
    <organismsDiffer>false</organismsDiffer>
    <experiments>6</experiments>
</comment>
<comment type="interaction">
    <interactant intactId="EBI-397872">
        <id>Q02248</id>
    </interactant>
    <interactant intactId="EBI-727707">
        <id>P25054</id>
        <label>APC</label>
    </interactant>
    <organismsDiffer>true</organismsDiffer>
    <experiments>8</experiments>
</comment>
<comment type="interaction">
    <interactant intactId="EBI-397872">
        <id>Q02248</id>
    </interactant>
    <interactant intactId="EBI-710484">
        <id>O15169</id>
        <label>AXIN1</label>
    </interactant>
    <organismsDiffer>true</organismsDiffer>
    <experiments>5</experiments>
</comment>
<comment type="interaction">
    <interactant intactId="EBI-397872">
        <id>Q02248</id>
    </interactant>
    <interactant intactId="EBI-747082">
        <id>Q9NSA3</id>
        <label>CTNNBIP1</label>
    </interactant>
    <organismsDiffer>true</organismsDiffer>
    <experiments>7</experiments>
</comment>
<comment type="interaction">
    <interactant intactId="EBI-397872">
        <id>Q02248</id>
    </interactant>
    <interactant intactId="EBI-373586">
        <id>P49841</id>
        <label>GSK3B</label>
    </interactant>
    <organismsDiffer>true</organismsDiffer>
    <experiments>3</experiments>
</comment>
<comment type="interaction">
    <interactant intactId="EBI-397872">
        <id>Q02248</id>
    </interactant>
    <interactant intactId="EBI-6927068">
        <id>F1MSG6</id>
        <label>RAPGEF2</label>
    </interactant>
    <organismsDiffer>true</organismsDiffer>
    <experiments>2</experiments>
</comment>
<comment type="interaction">
    <interactant intactId="EBI-397872">
        <id>Q02248</id>
    </interactant>
    <interactant intactId="EBI-540779">
        <id>O15047</id>
        <label>SETD1A</label>
    </interactant>
    <organismsDiffer>true</organismsDiffer>
    <experiments>2</experiments>
</comment>
<comment type="interaction">
    <interactant intactId="EBI-397872">
        <id>Q02248</id>
    </interactant>
    <interactant intactId="EBI-15603953">
        <id>P33148</id>
    </interactant>
    <organismsDiffer>true</organismsDiffer>
    <experiments>4</experiments>
</comment>
<comment type="subcellular location">
    <subcellularLocation>
        <location evidence="36 37 39">Cytoplasm</location>
    </subcellularLocation>
    <subcellularLocation>
        <location evidence="36 39">Nucleus</location>
    </subcellularLocation>
    <subcellularLocation>
        <location>Cytoplasm</location>
        <location>Cytoskeleton</location>
    </subcellularLocation>
    <subcellularLocation>
        <location evidence="31 37">Cell junction</location>
        <location evidence="31 37">Adherens junction</location>
    </subcellularLocation>
    <subcellularLocation>
        <location evidence="13">Cell junction</location>
    </subcellularLocation>
    <subcellularLocation>
        <location evidence="36">Cell membrane</location>
    </subcellularLocation>
    <subcellularLocation>
        <location evidence="3">Cytoplasm</location>
        <location evidence="3">Cytoskeleton</location>
        <location evidence="3">Microtubule organizing center</location>
        <location evidence="3">Centrosome</location>
    </subcellularLocation>
    <subcellularLocation>
        <location evidence="3">Cytoplasm</location>
        <location evidence="3">Cytoskeleton</location>
        <location evidence="3">Spindle pole</location>
    </subcellularLocation>
    <subcellularLocation>
        <location evidence="31">Synapse</location>
    </subcellularLocation>
    <subcellularLocation>
        <location evidence="33">Cytoplasm</location>
        <location evidence="33">Cytoskeleton</location>
        <location evidence="33">Cilium basal body</location>
    </subcellularLocation>
    <text evidence="2 3 36 37">Colocalized with RAPGEF2 and TJP1 at cell-cell contacts (By similarity). Cytoplasmic when it is un-stable (highly phosphorylated) or bound to CDH1. Translocates to the nucleus when it is stabilized (low level of phosphorylation). Interaction with GLIS2 and MUC1 promotes nuclear translocation. Interaction with EMD inhibits nuclear localization. The majority of CTNNB1 is localized to the cell membrane. In interphase, colocalizes with CROCC between CEP250 puncta at the proximal end of centrioles, and this localization is dependent on CROCC and CEP250. In mitosis, when NEK2 activity increases, it localizes to centrosomes at spindle poles independent of CROCC. Colocalizes with CDK5 in the cell-cell contacts and plasma membrane of undifferentiated and differentiated neuroblastoma cells. Interaction with FAM53B promotes translocation to the nucleus (By similarity). Translocates to the nucleus in the presence of SNAIL1 (By similarity). Ca(2+)-mediated localization to the cell membrane in dental epithelial cells is inhibited via WNT3A (PubMed:27015268). Localizes to cell-cell contacts as keratinocyte differentiation progresses (PubMed:27375112).</text>
</comment>
<comment type="tissue specificity">
    <text evidence="33 34 36">Expressed in cerebellar granule neurons (at protein level) (PubMed:21623382). Expressed in the intestinal epithelium (at protein level) (PubMed:22510880). Abundantly expressed in the tooth, skin, lung, kidney, eye and brain with weak expression in the liver and heart (PubMed:27015268).</text>
</comment>
<comment type="developmental stage">
    <text evidence="36 38">Expressed at 11 dpc in teeth, expression broadly increases until birth (PubMed:27015268). After birth expression decreases until 1 week of age (PubMed:27015268). Expressed in epithelial cells of the tooth germ at 13 dpc (at protein level). Expressed in the dental epithelium and stellate reticulum at 16 dpc (at protein level) (PubMed:27015268). Expressed in bell stage dental mesenchymal cells at 17.5 dpc (at protein level) (PubMed:29148101). Expressed in both the dental epithelium and dental papilla at birth (at protein level) (PubMed:27015268).</text>
</comment>
<comment type="PTM">
    <text evidence="3 28 29">Phosphorylation at Ser-552 by AMPK promotes stabilization of the protein, enhancing TCF/LEF-mediated transcription (PubMed:20361929). Phosphorylation by GSK3B requires prior phosphorylation of Ser-45 by another kinase (By similarity). Phosphorylation proceeds then from Thr-41 to Ser-37 and Ser-33 (By similarity). Phosphorylated by NEK2 (By similarity). EGF stimulates tyrosine phosphorylation (By similarity). Phosphorylated on Ser-33 and Ser-37 by HIPK2 and GSK3B, this phosphorylation triggers proteasomal degradation (PubMed:20307497). Phosphorylation on Ser-191 and Ser-246 by CDK5 (By similarity). Phosphorylation by CDK2 regulates insulin internalization (By similarity). Phosphorylation by PTK6 at Tyr-64, Tyr-142, Tyr-331 and/or Tyr-333 with the predominant site at Tyr-64 is not essential for inhibition of transcriptional activity (By similarity). Phosphorylation by SRC at Tyr-333 promotes interaction with isoform M2 of PKM (PKM2); promoting transcription activation (By similarity).</text>
</comment>
<comment type="PTM">
    <text evidence="3 46">Ubiquitinated by the SCF(BTRC) E3 ligase complex when phosphorylated by GSK3B, leading to its degradation (By similarity). Ubiquitinated by a E3 ubiquitin ligase complex containing UBE2D1, SIAH1, CACYBP/SIP, SKP1, APC and TBL1X, leading to its subsequent proteasomal degradation (By similarity). Ubiquitinated and degraded following interaction with SOX9 (PubMed:15132997). Ubiquitinated via 'Lys-11'- and 'Lys-29'-linked ubiquitin chains by UBR5, leading to its stabilization (By similarity).</text>
</comment>
<comment type="PTM">
    <text evidence="31">S-nitrosylation at Cys-619 within adherens junctions promotes VEGF-induced, NO-dependent endothelial cell permeability by disrupting interaction with E-cadherin, thus mediating disassembly adherens junctions.</text>
</comment>
<comment type="PTM">
    <text evidence="4">O-glycosylation at Ser-23 decreases nuclear localization and transcriptional activity, and increases localization to the plasma membrane and interaction with E-cadherin CDH1.</text>
</comment>
<comment type="PTM">
    <text evidence="3">Deacetylated at Lys-49 by SIRT1.</text>
</comment>
<comment type="disruption phenotype">
    <text evidence="32">Sympathetic ganglia-specific conditional knockout mice lead to a reduction in sympathetic ganglia size and in progenitor cell number, but does not alter sympathetic innervation of peripheral target organs.</text>
</comment>
<comment type="similarity">
    <text evidence="45">Belongs to the beta-catenin family.</text>
</comment>
<comment type="sequence caution" evidence="45">
    <conflict type="erroneous initiation">
        <sequence resource="EMBL-CDS" id="AAH06739"/>
    </conflict>
    <text>Truncated N-terminus.</text>
</comment>
<accession>Q02248</accession>
<accession>Q922W1</accession>
<accession>Q9D335</accession>
<feature type="initiator methionine" description="Removed" evidence="3">
    <location>
        <position position="1"/>
    </location>
</feature>
<feature type="chain" id="PRO_0000064272" description="Catenin beta-1">
    <location>
        <begin position="2"/>
        <end position="781"/>
    </location>
</feature>
<feature type="repeat" description="ARM 1">
    <location>
        <begin position="151"/>
        <end position="191"/>
    </location>
</feature>
<feature type="repeat" description="ARM 2">
    <location>
        <begin position="193"/>
        <end position="234"/>
    </location>
</feature>
<feature type="repeat" description="ARM 3">
    <location>
        <begin position="235"/>
        <end position="276"/>
    </location>
</feature>
<feature type="repeat" description="ARM 4">
    <location>
        <begin position="277"/>
        <end position="318"/>
    </location>
</feature>
<feature type="repeat" description="ARM 5">
    <location>
        <begin position="319"/>
        <end position="360"/>
    </location>
</feature>
<feature type="repeat" description="ARM 6">
    <location>
        <begin position="361"/>
        <end position="389"/>
    </location>
</feature>
<feature type="repeat" description="ARM 7">
    <location>
        <begin position="400"/>
        <end position="441"/>
    </location>
</feature>
<feature type="repeat" description="ARM 8">
    <location>
        <begin position="442"/>
        <end position="484"/>
    </location>
</feature>
<feature type="repeat" description="ARM 9">
    <location>
        <begin position="489"/>
        <end position="530"/>
    </location>
</feature>
<feature type="repeat" description="ARM 10">
    <location>
        <begin position="531"/>
        <end position="571"/>
    </location>
</feature>
<feature type="repeat" description="ARM 11">
    <location>
        <begin position="594"/>
        <end position="636"/>
    </location>
</feature>
<feature type="repeat" description="ARM 12">
    <location>
        <begin position="637"/>
        <end position="666"/>
    </location>
</feature>
<feature type="region of interest" description="Interaction with VCL" evidence="27">
    <location>
        <begin position="2"/>
        <end position="23"/>
    </location>
</feature>
<feature type="region of interest" description="Disordered" evidence="5">
    <location>
        <begin position="34"/>
        <end position="57"/>
    </location>
</feature>
<feature type="region of interest" description="Interaction with BCL9" evidence="1">
    <location>
        <begin position="156"/>
        <end position="178"/>
    </location>
</feature>
<feature type="region of interest" description="Disordered" evidence="5">
    <location>
        <begin position="720"/>
        <end position="781"/>
    </location>
</feature>
<feature type="region of interest" description="Interaction with SCRIB" evidence="25">
    <location>
        <begin position="772"/>
        <end position="781"/>
    </location>
</feature>
<feature type="compositionally biased region" description="Basic and acidic residues" evidence="5">
    <location>
        <begin position="734"/>
        <end position="745"/>
    </location>
</feature>
<feature type="modified residue" description="N-acetylalanine" evidence="3">
    <location>
        <position position="2"/>
    </location>
</feature>
<feature type="modified residue" description="Phosphoserine; by GSK3-beta; alternate" evidence="3">
    <location>
        <position position="23"/>
    </location>
</feature>
<feature type="modified residue" description="Phosphoserine; by GSK3-beta" evidence="3">
    <location>
        <position position="29"/>
    </location>
</feature>
<feature type="modified residue" description="Phosphoserine; by GSK3-beta and HIPK2" evidence="28">
    <location>
        <position position="33"/>
    </location>
</feature>
<feature type="modified residue" description="Phosphoserine; by GSK3-beta and HIPK2" evidence="28">
    <location>
        <position position="37"/>
    </location>
</feature>
<feature type="modified residue" description="Phosphothreonine; by GSK3-beta" evidence="3">
    <location>
        <position position="41"/>
    </location>
</feature>
<feature type="modified residue" description="Phosphoserine" evidence="49">
    <location>
        <position position="45"/>
    </location>
</feature>
<feature type="modified residue" description="N6-acetyllysine" evidence="3">
    <location>
        <position position="49"/>
    </location>
</feature>
<feature type="modified residue" description="Phosphotyrosine; by PTK6" evidence="3">
    <location>
        <position position="64"/>
    </location>
</feature>
<feature type="modified residue" description="Phosphotyrosine; by FYN and PTK6" evidence="14">
    <location>
        <position position="142"/>
    </location>
</feature>
<feature type="modified residue" description="Phosphoserine" evidence="48 49">
    <location>
        <position position="191"/>
    </location>
</feature>
<feature type="modified residue" description="Phosphoserine; by CDK5" evidence="3">
    <location>
        <position position="246"/>
    </location>
</feature>
<feature type="modified residue" description="Phosphotyrosine" evidence="3">
    <location>
        <position position="331"/>
    </location>
</feature>
<feature type="modified residue" description="Phosphotyrosine" evidence="3">
    <location>
        <position position="333"/>
    </location>
</feature>
<feature type="modified residue" description="Phosphoserine; by AMPK" evidence="29 48">
    <location>
        <position position="552"/>
    </location>
</feature>
<feature type="modified residue" description="Phosphothreonine" evidence="3">
    <location>
        <position position="556"/>
    </location>
</feature>
<feature type="modified residue" description="S-nitrosocysteine" evidence="31">
    <location>
        <position position="619"/>
    </location>
</feature>
<feature type="modified residue" description="Phosphoserine" evidence="48 49">
    <location>
        <position position="675"/>
    </location>
</feature>
<feature type="glycosylation site" description="O-linked (GlcNAc) serine; alternate" evidence="4">
    <location>
        <position position="23"/>
    </location>
</feature>
<feature type="mutagenesis site" description="Loss of interaction with VCL." evidence="27">
    <original>M</original>
    <variation>P</variation>
    <location>
        <position position="8"/>
    </location>
</feature>
<feature type="mutagenesis site" description="Abolished HIPK2-mediated proteasomal degradation." evidence="28">
    <original>S</original>
    <variation>A</variation>
    <location>
        <position position="33"/>
    </location>
</feature>
<feature type="mutagenesis site" description="Abolished HIPK2-mediated proteasomal degradation." evidence="28">
    <original>S</original>
    <variation>A</variation>
    <location>
        <position position="37"/>
    </location>
</feature>
<feature type="mutagenesis site" description="Abolishes AMPK-mediated phosphorylation." evidence="29">
    <original>S</original>
    <variation>A</variation>
    <location>
        <position position="552"/>
    </location>
</feature>
<feature type="sequence conflict" description="In Ref. 2; BAB31250." evidence="45" ref="2">
    <original>T</original>
    <variation>I</variation>
    <location>
        <position position="371"/>
    </location>
</feature>
<feature type="sequence conflict" description="In Ref. 2; BAB31250." evidence="45" ref="2">
    <original>A</original>
    <variation>T</variation>
    <location>
        <position position="478"/>
    </location>
</feature>
<feature type="sequence conflict" description="In Ref. 2; BAB31250." evidence="45" ref="2">
    <original>L</original>
    <variation>F</variation>
    <location>
        <position position="487"/>
    </location>
</feature>
<feature type="helix" evidence="56">
    <location>
        <begin position="85"/>
        <end position="88"/>
    </location>
</feature>
<feature type="helix" evidence="56">
    <location>
        <begin position="90"/>
        <end position="98"/>
    </location>
</feature>
<feature type="helix" evidence="56">
    <location>
        <begin position="100"/>
        <end position="102"/>
    </location>
</feature>
<feature type="helix" evidence="50">
    <location>
        <begin position="121"/>
        <end position="141"/>
    </location>
</feature>
<feature type="turn" evidence="50">
    <location>
        <begin position="145"/>
        <end position="148"/>
    </location>
</feature>
<feature type="turn" evidence="51">
    <location>
        <begin position="150"/>
        <end position="152"/>
    </location>
</feature>
<feature type="helix" evidence="51">
    <location>
        <begin position="153"/>
        <end position="160"/>
    </location>
</feature>
<feature type="strand" evidence="52">
    <location>
        <begin position="161"/>
        <end position="164"/>
    </location>
</feature>
<feature type="strand" evidence="55">
    <location>
        <begin position="166"/>
        <end position="168"/>
    </location>
</feature>
<feature type="helix" evidence="55">
    <location>
        <begin position="169"/>
        <end position="171"/>
    </location>
</feature>
<feature type="helix" evidence="54">
    <location>
        <begin position="172"/>
        <end position="178"/>
    </location>
</feature>
<feature type="helix" evidence="54">
    <location>
        <begin position="182"/>
        <end position="189"/>
    </location>
</feature>
<feature type="strand" evidence="54">
    <location>
        <begin position="192"/>
        <end position="194"/>
    </location>
</feature>
<feature type="helix" evidence="54">
    <location>
        <begin position="195"/>
        <end position="204"/>
    </location>
</feature>
<feature type="helix" evidence="54">
    <location>
        <begin position="208"/>
        <end position="221"/>
    </location>
</feature>
<feature type="helix" evidence="54">
    <location>
        <begin position="225"/>
        <end position="233"/>
    </location>
</feature>
<feature type="helix" evidence="54">
    <location>
        <begin position="236"/>
        <end position="242"/>
    </location>
</feature>
<feature type="helix" evidence="54">
    <location>
        <begin position="243"/>
        <end position="245"/>
    </location>
</feature>
<feature type="helix" evidence="54">
    <location>
        <begin position="249"/>
        <end position="265"/>
    </location>
</feature>
<feature type="helix" evidence="54">
    <location>
        <begin position="269"/>
        <end position="275"/>
    </location>
</feature>
<feature type="helix" evidence="54">
    <location>
        <begin position="278"/>
        <end position="284"/>
    </location>
</feature>
<feature type="helix" evidence="54">
    <location>
        <begin position="285"/>
        <end position="287"/>
    </location>
</feature>
<feature type="helix" evidence="54">
    <location>
        <begin position="291"/>
        <end position="305"/>
    </location>
</feature>
<feature type="helix" evidence="54">
    <location>
        <begin position="309"/>
        <end position="317"/>
    </location>
</feature>
<feature type="helix" evidence="54">
    <location>
        <begin position="320"/>
        <end position="330"/>
    </location>
</feature>
<feature type="helix" evidence="54">
    <location>
        <begin position="334"/>
        <end position="347"/>
    </location>
</feature>
<feature type="helix" evidence="54">
    <location>
        <begin position="353"/>
        <end position="359"/>
    </location>
</feature>
<feature type="helix" evidence="54">
    <location>
        <begin position="362"/>
        <end position="367"/>
    </location>
</feature>
<feature type="turn" evidence="54">
    <location>
        <begin position="368"/>
        <end position="371"/>
    </location>
</feature>
<feature type="helix" evidence="54">
    <location>
        <begin position="375"/>
        <end position="389"/>
    </location>
</feature>
<feature type="helix" evidence="54">
    <location>
        <begin position="399"/>
        <end position="408"/>
    </location>
</feature>
<feature type="helix" evidence="54">
    <location>
        <begin position="414"/>
        <end position="428"/>
    </location>
</feature>
<feature type="helix" evidence="54">
    <location>
        <begin position="432"/>
        <end position="440"/>
    </location>
</feature>
<feature type="helix" evidence="54">
    <location>
        <begin position="443"/>
        <end position="454"/>
    </location>
</feature>
<feature type="helix" evidence="54">
    <location>
        <begin position="458"/>
        <end position="471"/>
    </location>
</feature>
<feature type="strand" evidence="54">
    <location>
        <begin position="473"/>
        <end position="475"/>
    </location>
</feature>
<feature type="helix" evidence="54">
    <location>
        <begin position="478"/>
        <end position="487"/>
    </location>
</feature>
<feature type="helix" evidence="54">
    <location>
        <begin position="491"/>
        <end position="496"/>
    </location>
</feature>
<feature type="helix" evidence="54">
    <location>
        <begin position="504"/>
        <end position="517"/>
    </location>
</feature>
<feature type="helix" evidence="54">
    <location>
        <begin position="521"/>
        <end position="523"/>
    </location>
</feature>
<feature type="helix" evidence="54">
    <location>
        <begin position="524"/>
        <end position="529"/>
    </location>
</feature>
<feature type="helix" evidence="54">
    <location>
        <begin position="532"/>
        <end position="547"/>
    </location>
</feature>
<feature type="helix" evidence="54">
    <location>
        <begin position="566"/>
        <end position="580"/>
    </location>
</feature>
<feature type="helix" evidence="54">
    <location>
        <begin position="584"/>
        <end position="592"/>
    </location>
</feature>
<feature type="helix" evidence="54">
    <location>
        <begin position="596"/>
        <end position="602"/>
    </location>
</feature>
<feature type="helix" evidence="54">
    <location>
        <begin position="608"/>
        <end position="621"/>
    </location>
</feature>
<feature type="helix" evidence="54">
    <location>
        <begin position="625"/>
        <end position="633"/>
    </location>
</feature>
<feature type="turn" evidence="53">
    <location>
        <begin position="634"/>
        <end position="636"/>
    </location>
</feature>
<feature type="helix" evidence="54">
    <location>
        <begin position="637"/>
        <end position="643"/>
    </location>
</feature>
<feature type="helix" evidence="54">
    <location>
        <begin position="649"/>
        <end position="661"/>
    </location>
</feature>
<gene>
    <name evidence="47" type="primary">Ctnnb1</name>
    <name evidence="47" type="synonym">Catnb</name>
</gene>
<dbReference type="EMBL" id="M90364">
    <property type="protein sequence ID" value="AAA37280.1"/>
    <property type="molecule type" value="mRNA"/>
</dbReference>
<dbReference type="EMBL" id="AK035311">
    <property type="protein sequence ID" value="BAC29027.1"/>
    <property type="molecule type" value="mRNA"/>
</dbReference>
<dbReference type="EMBL" id="AK018515">
    <property type="protein sequence ID" value="BAB31250.1"/>
    <property type="molecule type" value="mRNA"/>
</dbReference>
<dbReference type="EMBL" id="BC006739">
    <property type="protein sequence ID" value="AAH06739.1"/>
    <property type="status" value="ALT_INIT"/>
    <property type="molecule type" value="mRNA"/>
</dbReference>
<dbReference type="EMBL" id="BC048153">
    <property type="protein sequence ID" value="AAH48153.1"/>
    <property type="molecule type" value="mRNA"/>
</dbReference>
<dbReference type="EMBL" id="BC053065">
    <property type="protein sequence ID" value="AAH53065.1"/>
    <property type="molecule type" value="mRNA"/>
</dbReference>
<dbReference type="CCDS" id="CCDS23630.1"/>
<dbReference type="PIR" id="S35091">
    <property type="entry name" value="S35091"/>
</dbReference>
<dbReference type="RefSeq" id="NP_001159374.1">
    <property type="nucleotide sequence ID" value="NM_001165902.2"/>
</dbReference>
<dbReference type="RefSeq" id="NP_001418600.1">
    <property type="nucleotide sequence ID" value="NM_001431671.1"/>
</dbReference>
<dbReference type="RefSeq" id="NP_001418601.1">
    <property type="nucleotide sequence ID" value="NM_001431672.1"/>
</dbReference>
<dbReference type="RefSeq" id="NP_001418602.1">
    <property type="nucleotide sequence ID" value="NM_001431673.1"/>
</dbReference>
<dbReference type="RefSeq" id="NP_031640.1">
    <property type="nucleotide sequence ID" value="NM_007614.4"/>
</dbReference>
<dbReference type="PDB" id="1DOW">
    <property type="method" value="X-ray"/>
    <property type="resolution" value="1.80 A"/>
    <property type="chains" value="B=118-149"/>
</dbReference>
<dbReference type="PDB" id="1I7W">
    <property type="method" value="X-ray"/>
    <property type="resolution" value="2.00 A"/>
    <property type="chains" value="A/C=134-671"/>
</dbReference>
<dbReference type="PDB" id="1I7X">
    <property type="method" value="X-ray"/>
    <property type="resolution" value="3.00 A"/>
    <property type="chains" value="A/C=134-671"/>
</dbReference>
<dbReference type="PDB" id="1JPP">
    <property type="method" value="X-ray"/>
    <property type="resolution" value="3.10 A"/>
    <property type="chains" value="A/B=134-671"/>
</dbReference>
<dbReference type="PDB" id="1M1E">
    <property type="method" value="X-ray"/>
    <property type="resolution" value="2.10 A"/>
    <property type="chains" value="A=134-671"/>
</dbReference>
<dbReference type="PDB" id="1V18">
    <property type="method" value="X-ray"/>
    <property type="resolution" value="2.10 A"/>
    <property type="chains" value="A=134-671"/>
</dbReference>
<dbReference type="PDB" id="2BCT">
    <property type="method" value="X-ray"/>
    <property type="resolution" value="2.90 A"/>
    <property type="chains" value="A=150-665"/>
</dbReference>
<dbReference type="PDB" id="3BCT">
    <property type="method" value="X-ray"/>
    <property type="resolution" value="2.10 A"/>
    <property type="chains" value="A=193-661"/>
</dbReference>
<dbReference type="PDB" id="3OUW">
    <property type="method" value="X-ray"/>
    <property type="resolution" value="2.91 A"/>
    <property type="chains" value="A=134-671"/>
</dbReference>
<dbReference type="PDB" id="3OUX">
    <property type="method" value="X-ray"/>
    <property type="resolution" value="2.40 A"/>
    <property type="chains" value="A=134-671"/>
</dbReference>
<dbReference type="PDB" id="4EV8">
    <property type="method" value="X-ray"/>
    <property type="resolution" value="1.90 A"/>
    <property type="chains" value="A=134-671"/>
</dbReference>
<dbReference type="PDB" id="4EV9">
    <property type="method" value="X-ray"/>
    <property type="resolution" value="2.10 A"/>
    <property type="chains" value="A=134-671"/>
</dbReference>
<dbReference type="PDB" id="4EVA">
    <property type="method" value="X-ray"/>
    <property type="resolution" value="2.00 A"/>
    <property type="chains" value="A/C=134-671"/>
</dbReference>
<dbReference type="PDB" id="4EVP">
    <property type="method" value="X-ray"/>
    <property type="resolution" value="2.26 A"/>
    <property type="chains" value="A=134-671"/>
</dbReference>
<dbReference type="PDB" id="4EVT">
    <property type="method" value="X-ray"/>
    <property type="resolution" value="2.34 A"/>
    <property type="chains" value="A=134-671"/>
</dbReference>
<dbReference type="PDB" id="4ONS">
    <property type="method" value="X-ray"/>
    <property type="resolution" value="2.80 A"/>
    <property type="chains" value="B/D=78-151"/>
</dbReference>
<dbReference type="PDBsum" id="1DOW"/>
<dbReference type="PDBsum" id="1I7W"/>
<dbReference type="PDBsum" id="1I7X"/>
<dbReference type="PDBsum" id="1JPP"/>
<dbReference type="PDBsum" id="1M1E"/>
<dbReference type="PDBsum" id="1V18"/>
<dbReference type="PDBsum" id="2BCT"/>
<dbReference type="PDBsum" id="3BCT"/>
<dbReference type="PDBsum" id="3OUW"/>
<dbReference type="PDBsum" id="3OUX"/>
<dbReference type="PDBsum" id="4EV8"/>
<dbReference type="PDBsum" id="4EV9"/>
<dbReference type="PDBsum" id="4EVA"/>
<dbReference type="PDBsum" id="4EVP"/>
<dbReference type="PDBsum" id="4EVT"/>
<dbReference type="PDBsum" id="4ONS"/>
<dbReference type="SMR" id="Q02248"/>
<dbReference type="BioGRID" id="198512">
    <property type="interactions" value="131"/>
</dbReference>
<dbReference type="ComplexPortal" id="CPX-318">
    <property type="entry name" value="beta1-catenin - LEF1 complex"/>
</dbReference>
<dbReference type="ComplexPortal" id="CPX-86">
    <property type="entry name" value="Beta-catenin-ICAT complex"/>
</dbReference>
<dbReference type="CORUM" id="Q02248"/>
<dbReference type="DIP" id="DIP-31560N"/>
<dbReference type="FunCoup" id="Q02248">
    <property type="interactions" value="2755"/>
</dbReference>
<dbReference type="IntAct" id="Q02248">
    <property type="interactions" value="79"/>
</dbReference>
<dbReference type="MINT" id="Q02248"/>
<dbReference type="STRING" id="10090.ENSMUSP00000007130"/>
<dbReference type="BindingDB" id="Q02248"/>
<dbReference type="ChEMBL" id="CHEMBL4105846"/>
<dbReference type="TCDB" id="8.A.160.2.1">
    <property type="family name" value="the catenin (catenin) family"/>
</dbReference>
<dbReference type="GlyCosmos" id="Q02248">
    <property type="glycosylation" value="1 site, No reported glycans"/>
</dbReference>
<dbReference type="GlyGen" id="Q02248">
    <property type="glycosylation" value="5 sites, 2 N-linked glycans (2 sites), 1 O-linked glycan (3 sites)"/>
</dbReference>
<dbReference type="iPTMnet" id="Q02248"/>
<dbReference type="MetOSite" id="Q02248"/>
<dbReference type="PhosphoSitePlus" id="Q02248"/>
<dbReference type="SwissPalm" id="Q02248"/>
<dbReference type="jPOST" id="Q02248"/>
<dbReference type="PaxDb" id="10090-ENSMUSP00000007130"/>
<dbReference type="PeptideAtlas" id="Q02248"/>
<dbReference type="ProteomicsDB" id="285221"/>
<dbReference type="Pumba" id="Q02248"/>
<dbReference type="Antibodypedia" id="3432">
    <property type="antibodies" value="5149 antibodies from 58 providers"/>
</dbReference>
<dbReference type="DNASU" id="12387"/>
<dbReference type="Ensembl" id="ENSMUST00000007130.15">
    <property type="protein sequence ID" value="ENSMUSP00000007130.9"/>
    <property type="gene ID" value="ENSMUSG00000006932.18"/>
</dbReference>
<dbReference type="Ensembl" id="ENSMUST00000178812.9">
    <property type="protein sequence ID" value="ENSMUSP00000136294.2"/>
    <property type="gene ID" value="ENSMUSG00000006932.18"/>
</dbReference>
<dbReference type="GeneID" id="12387"/>
<dbReference type="KEGG" id="mmu:12387"/>
<dbReference type="UCSC" id="uc009scu.2">
    <property type="organism name" value="mouse"/>
</dbReference>
<dbReference type="AGR" id="MGI:88276"/>
<dbReference type="CTD" id="1499"/>
<dbReference type="MGI" id="MGI:88276">
    <property type="gene designation" value="Ctnnb1"/>
</dbReference>
<dbReference type="VEuPathDB" id="HostDB:ENSMUSG00000006932"/>
<dbReference type="eggNOG" id="KOG4203">
    <property type="taxonomic scope" value="Eukaryota"/>
</dbReference>
<dbReference type="GeneTree" id="ENSGT00940000155471"/>
<dbReference type="HOGENOM" id="CLU_008757_1_1_1"/>
<dbReference type="InParanoid" id="Q02248"/>
<dbReference type="OMA" id="YPKLVYT"/>
<dbReference type="OrthoDB" id="195736at2759"/>
<dbReference type="PhylomeDB" id="Q02248"/>
<dbReference type="TreeFam" id="TF317997"/>
<dbReference type="Reactome" id="R-MMU-195253">
    <property type="pathway name" value="Degradation of beta-catenin by the destruction complex"/>
</dbReference>
<dbReference type="Reactome" id="R-MMU-196299">
    <property type="pathway name" value="Beta-catenin phosphorylation cascade"/>
</dbReference>
<dbReference type="Reactome" id="R-MMU-201681">
    <property type="pathway name" value="TCF dependent signaling in response to WNT"/>
</dbReference>
<dbReference type="Reactome" id="R-MMU-201722">
    <property type="pathway name" value="Formation of the beta-catenin:TCF transactivating complex"/>
</dbReference>
<dbReference type="Reactome" id="R-MMU-3134973">
    <property type="pathway name" value="LRR FLII-interacting protein 1 (LRRFIP1) activates type I IFN production"/>
</dbReference>
<dbReference type="Reactome" id="R-MMU-351906">
    <property type="pathway name" value="Apoptotic cleavage of cell adhesion proteins"/>
</dbReference>
<dbReference type="Reactome" id="R-MMU-3769402">
    <property type="pathway name" value="Deactivation of the beta-catenin transactivating complex"/>
</dbReference>
<dbReference type="Reactome" id="R-MMU-4086398">
    <property type="pathway name" value="Ca2+ pathway"/>
</dbReference>
<dbReference type="Reactome" id="R-MMU-418990">
    <property type="pathway name" value="Adherens junctions interactions"/>
</dbReference>
<dbReference type="Reactome" id="R-MMU-4641262">
    <property type="pathway name" value="Disassembly of the destruction complex and recruitment of AXIN to the membrane"/>
</dbReference>
<dbReference type="Reactome" id="R-MMU-5218920">
    <property type="pathway name" value="VEGFR2 mediated vascular permeability"/>
</dbReference>
<dbReference type="Reactome" id="R-MMU-525793">
    <property type="pathway name" value="Myogenesis"/>
</dbReference>
<dbReference type="Reactome" id="R-MMU-5626467">
    <property type="pathway name" value="RHO GTPases activate IQGAPs"/>
</dbReference>
<dbReference type="Reactome" id="R-MMU-8951430">
    <property type="pathway name" value="RUNX3 regulates WNT signaling"/>
</dbReference>
<dbReference type="Reactome" id="R-MMU-9762292">
    <property type="pathway name" value="Regulation of CDH11 function"/>
</dbReference>
<dbReference type="Reactome" id="R-MMU-9825892">
    <property type="pathway name" value="Regulation of MITF-M-dependent genes involved in cell cycle and proliferation"/>
</dbReference>
<dbReference type="BioGRID-ORCS" id="12387">
    <property type="hits" value="5 hits in 83 CRISPR screens"/>
</dbReference>
<dbReference type="CD-CODE" id="01CA17F3">
    <property type="entry name" value="Centrosome"/>
</dbReference>
<dbReference type="CD-CODE" id="CE726F99">
    <property type="entry name" value="Postsynaptic density"/>
</dbReference>
<dbReference type="ChiTaRS" id="Ctnnb1">
    <property type="organism name" value="mouse"/>
</dbReference>
<dbReference type="EvolutionaryTrace" id="Q02248"/>
<dbReference type="PRO" id="PR:Q02248"/>
<dbReference type="Proteomes" id="UP000000589">
    <property type="component" value="Chromosome 9"/>
</dbReference>
<dbReference type="RNAct" id="Q02248">
    <property type="molecule type" value="protein"/>
</dbReference>
<dbReference type="Bgee" id="ENSMUSG00000006932">
    <property type="expression patterns" value="Expressed in primitive streak and 308 other cell types or tissues"/>
</dbReference>
<dbReference type="ExpressionAtlas" id="Q02248">
    <property type="expression patterns" value="baseline and differential"/>
</dbReference>
<dbReference type="GO" id="GO:0005912">
    <property type="term" value="C:adherens junction"/>
    <property type="evidence" value="ECO:0000314"/>
    <property type="project" value="UniProtKB"/>
</dbReference>
<dbReference type="GO" id="GO:0043296">
    <property type="term" value="C:apical junction complex"/>
    <property type="evidence" value="ECO:0000314"/>
    <property type="project" value="MGI"/>
</dbReference>
<dbReference type="GO" id="GO:0045177">
    <property type="term" value="C:apical part of cell"/>
    <property type="evidence" value="ECO:0000314"/>
    <property type="project" value="MGI"/>
</dbReference>
<dbReference type="GO" id="GO:0016327">
    <property type="term" value="C:apicolateral plasma membrane"/>
    <property type="evidence" value="ECO:0000314"/>
    <property type="project" value="MGI"/>
</dbReference>
<dbReference type="GO" id="GO:0016323">
    <property type="term" value="C:basolateral plasma membrane"/>
    <property type="evidence" value="ECO:0000314"/>
    <property type="project" value="MGI"/>
</dbReference>
<dbReference type="GO" id="GO:0030877">
    <property type="term" value="C:beta-catenin destruction complex"/>
    <property type="evidence" value="ECO:0000314"/>
    <property type="project" value="MGI"/>
</dbReference>
<dbReference type="GO" id="GO:1990711">
    <property type="term" value="C:beta-catenin-ICAT complex"/>
    <property type="evidence" value="ECO:0000353"/>
    <property type="project" value="ComplexPortal"/>
</dbReference>
<dbReference type="GO" id="GO:1990907">
    <property type="term" value="C:beta-catenin-TCF complex"/>
    <property type="evidence" value="ECO:0000314"/>
    <property type="project" value="ParkinsonsUK-UCL"/>
</dbReference>
<dbReference type="GO" id="GO:0070369">
    <property type="term" value="C:beta-catenin-TCF7L2 complex"/>
    <property type="evidence" value="ECO:0000250"/>
    <property type="project" value="UniProtKB"/>
</dbReference>
<dbReference type="GO" id="GO:0005923">
    <property type="term" value="C:bicellular tight junction"/>
    <property type="evidence" value="ECO:0000314"/>
    <property type="project" value="MGI"/>
</dbReference>
<dbReference type="GO" id="GO:0016342">
    <property type="term" value="C:catenin complex"/>
    <property type="evidence" value="ECO:0000314"/>
    <property type="project" value="MGI"/>
</dbReference>
<dbReference type="GO" id="GO:0005938">
    <property type="term" value="C:cell cortex"/>
    <property type="evidence" value="ECO:0000250"/>
    <property type="project" value="UniProtKB"/>
</dbReference>
<dbReference type="GO" id="GO:0030054">
    <property type="term" value="C:cell junction"/>
    <property type="evidence" value="ECO:0000250"/>
    <property type="project" value="UniProtKB"/>
</dbReference>
<dbReference type="GO" id="GO:0071944">
    <property type="term" value="C:cell periphery"/>
    <property type="evidence" value="ECO:0000250"/>
    <property type="project" value="UniProtKB"/>
</dbReference>
<dbReference type="GO" id="GO:0031253">
    <property type="term" value="C:cell projection membrane"/>
    <property type="evidence" value="ECO:0000314"/>
    <property type="project" value="MGI"/>
</dbReference>
<dbReference type="GO" id="GO:0005911">
    <property type="term" value="C:cell-cell junction"/>
    <property type="evidence" value="ECO:0000314"/>
    <property type="project" value="BHF-UCL"/>
</dbReference>
<dbReference type="GO" id="GO:0005813">
    <property type="term" value="C:centrosome"/>
    <property type="evidence" value="ECO:0000314"/>
    <property type="project" value="BHF-UCL"/>
</dbReference>
<dbReference type="GO" id="GO:0036064">
    <property type="term" value="C:ciliary basal body"/>
    <property type="evidence" value="ECO:0007669"/>
    <property type="project" value="Ensembl"/>
</dbReference>
<dbReference type="GO" id="GO:0005737">
    <property type="term" value="C:cytoplasm"/>
    <property type="evidence" value="ECO:0000314"/>
    <property type="project" value="UniProtKB"/>
</dbReference>
<dbReference type="GO" id="GO:0005829">
    <property type="term" value="C:cytosol"/>
    <property type="evidence" value="ECO:0000314"/>
    <property type="project" value="ParkinsonsUK-UCL"/>
</dbReference>
<dbReference type="GO" id="GO:0000791">
    <property type="term" value="C:euchromatin"/>
    <property type="evidence" value="ECO:0000314"/>
    <property type="project" value="BHF-UCL"/>
</dbReference>
<dbReference type="GO" id="GO:0005916">
    <property type="term" value="C:fascia adherens"/>
    <property type="evidence" value="ECO:0000314"/>
    <property type="project" value="MGI"/>
</dbReference>
<dbReference type="GO" id="GO:0016600">
    <property type="term" value="C:flotillin complex"/>
    <property type="evidence" value="ECO:0000314"/>
    <property type="project" value="UniProtKB"/>
</dbReference>
<dbReference type="GO" id="GO:0098978">
    <property type="term" value="C:glutamatergic synapse"/>
    <property type="evidence" value="ECO:0000314"/>
    <property type="project" value="SynGO"/>
</dbReference>
<dbReference type="GO" id="GO:0014704">
    <property type="term" value="C:intercalated disc"/>
    <property type="evidence" value="ECO:0000314"/>
    <property type="project" value="MGI"/>
</dbReference>
<dbReference type="GO" id="GO:0030027">
    <property type="term" value="C:lamellipodium"/>
    <property type="evidence" value="ECO:0000314"/>
    <property type="project" value="MGI"/>
</dbReference>
<dbReference type="GO" id="GO:0016328">
    <property type="term" value="C:lateral plasma membrane"/>
    <property type="evidence" value="ECO:0000314"/>
    <property type="project" value="MGI"/>
</dbReference>
<dbReference type="GO" id="GO:0016020">
    <property type="term" value="C:membrane"/>
    <property type="evidence" value="ECO:0000314"/>
    <property type="project" value="ParkinsonsUK-UCL"/>
</dbReference>
<dbReference type="GO" id="GO:0031528">
    <property type="term" value="C:microvillus membrane"/>
    <property type="evidence" value="ECO:0000314"/>
    <property type="project" value="MGI"/>
</dbReference>
<dbReference type="GO" id="GO:0005654">
    <property type="term" value="C:nucleoplasm"/>
    <property type="evidence" value="ECO:0000304"/>
    <property type="project" value="Reactome"/>
</dbReference>
<dbReference type="GO" id="GO:0005634">
    <property type="term" value="C:nucleus"/>
    <property type="evidence" value="ECO:0000314"/>
    <property type="project" value="UniProtKB"/>
</dbReference>
<dbReference type="GO" id="GO:0048471">
    <property type="term" value="C:perinuclear region of cytoplasm"/>
    <property type="evidence" value="ECO:0000250"/>
    <property type="project" value="UniProtKB"/>
</dbReference>
<dbReference type="GO" id="GO:0005886">
    <property type="term" value="C:plasma membrane"/>
    <property type="evidence" value="ECO:0000314"/>
    <property type="project" value="UniProtKB"/>
</dbReference>
<dbReference type="GO" id="GO:0099092">
    <property type="term" value="C:postsynaptic density, intracellular component"/>
    <property type="evidence" value="ECO:0000314"/>
    <property type="project" value="SynGO"/>
</dbReference>
<dbReference type="GO" id="GO:0045211">
    <property type="term" value="C:postsynaptic membrane"/>
    <property type="evidence" value="ECO:0000314"/>
    <property type="project" value="SynGO"/>
</dbReference>
<dbReference type="GO" id="GO:0098831">
    <property type="term" value="C:presynaptic active zone cytoplasmic component"/>
    <property type="evidence" value="ECO:0000314"/>
    <property type="project" value="SynGO"/>
</dbReference>
<dbReference type="GO" id="GO:0042734">
    <property type="term" value="C:presynaptic membrane"/>
    <property type="evidence" value="ECO:0000314"/>
    <property type="project" value="SynGO"/>
</dbReference>
<dbReference type="GO" id="GO:0032991">
    <property type="term" value="C:protein-containing complex"/>
    <property type="evidence" value="ECO:0000266"/>
    <property type="project" value="MGI"/>
</dbReference>
<dbReference type="GO" id="GO:0032993">
    <property type="term" value="C:protein-DNA complex"/>
    <property type="evidence" value="ECO:0000250"/>
    <property type="project" value="UniProtKB"/>
</dbReference>
<dbReference type="GO" id="GO:0090575">
    <property type="term" value="C:RNA polymerase II transcription regulator complex"/>
    <property type="evidence" value="ECO:0000353"/>
    <property type="project" value="ComplexPortal"/>
</dbReference>
<dbReference type="GO" id="GO:0098685">
    <property type="term" value="C:Schaffer collateral - CA1 synapse"/>
    <property type="evidence" value="ECO:0000314"/>
    <property type="project" value="SynGO"/>
</dbReference>
<dbReference type="GO" id="GO:0034750">
    <property type="term" value="C:Scrib-APC-beta-catenin complex"/>
    <property type="evidence" value="ECO:0000314"/>
    <property type="project" value="BHF-UCL"/>
</dbReference>
<dbReference type="GO" id="GO:0000922">
    <property type="term" value="C:spindle pole"/>
    <property type="evidence" value="ECO:0007669"/>
    <property type="project" value="UniProtKB-SubCell"/>
</dbReference>
<dbReference type="GO" id="GO:0045202">
    <property type="term" value="C:synapse"/>
    <property type="evidence" value="ECO:0000314"/>
    <property type="project" value="UniProtKB"/>
</dbReference>
<dbReference type="GO" id="GO:0005667">
    <property type="term" value="C:transcription regulator complex"/>
    <property type="evidence" value="ECO:0000314"/>
    <property type="project" value="BHF-UCL"/>
</dbReference>
<dbReference type="GO" id="GO:1990909">
    <property type="term" value="C:Wnt signalosome"/>
    <property type="evidence" value="ECO:0000314"/>
    <property type="project" value="ParkinsonsUK-UCL"/>
</dbReference>
<dbReference type="GO" id="GO:0030018">
    <property type="term" value="C:Z disc"/>
    <property type="evidence" value="ECO:0000314"/>
    <property type="project" value="MGI"/>
</dbReference>
<dbReference type="GO" id="GO:0045294">
    <property type="term" value="F:alpha-catenin binding"/>
    <property type="evidence" value="ECO:0000314"/>
    <property type="project" value="MGI"/>
</dbReference>
<dbReference type="GO" id="GO:0045296">
    <property type="term" value="F:cadherin binding"/>
    <property type="evidence" value="ECO:0000353"/>
    <property type="project" value="CAFA"/>
</dbReference>
<dbReference type="GO" id="GO:0003682">
    <property type="term" value="F:chromatin binding"/>
    <property type="evidence" value="ECO:0000314"/>
    <property type="project" value="ParkinsonsUK-UCL"/>
</dbReference>
<dbReference type="GO" id="GO:0097718">
    <property type="term" value="F:disordered domain specific binding"/>
    <property type="evidence" value="ECO:0000353"/>
    <property type="project" value="CAFA"/>
</dbReference>
<dbReference type="GO" id="GO:0140297">
    <property type="term" value="F:DNA-binding transcription factor binding"/>
    <property type="evidence" value="ECO:0000353"/>
    <property type="project" value="UniProtKB"/>
</dbReference>
<dbReference type="GO" id="GO:0019899">
    <property type="term" value="F:enzyme binding"/>
    <property type="evidence" value="ECO:0000353"/>
    <property type="project" value="ParkinsonsUK-UCL"/>
</dbReference>
<dbReference type="GO" id="GO:1990226">
    <property type="term" value="F:histone methyltransferase binding"/>
    <property type="evidence" value="ECO:0000353"/>
    <property type="project" value="BHF-UCL"/>
</dbReference>
<dbReference type="GO" id="GO:0070411">
    <property type="term" value="F:I-SMAD binding"/>
    <property type="evidence" value="ECO:0007669"/>
    <property type="project" value="Ensembl"/>
</dbReference>
<dbReference type="GO" id="GO:0140677">
    <property type="term" value="F:molecular function activator activity"/>
    <property type="evidence" value="ECO:0000269"/>
    <property type="project" value="DisProt"/>
</dbReference>
<dbReference type="GO" id="GO:0030331">
    <property type="term" value="F:nuclear estrogen receptor binding"/>
    <property type="evidence" value="ECO:0007669"/>
    <property type="project" value="Ensembl"/>
</dbReference>
<dbReference type="GO" id="GO:0016922">
    <property type="term" value="F:nuclear receptor binding"/>
    <property type="evidence" value="ECO:0000353"/>
    <property type="project" value="UniProtKB"/>
</dbReference>
<dbReference type="GO" id="GO:0003676">
    <property type="term" value="F:nucleic acid binding"/>
    <property type="evidence" value="ECO:0000269"/>
    <property type="project" value="DisProt"/>
</dbReference>
<dbReference type="GO" id="GO:0019901">
    <property type="term" value="F:protein kinase binding"/>
    <property type="evidence" value="ECO:0000353"/>
    <property type="project" value="ParkinsonsUK-UCL"/>
</dbReference>
<dbReference type="GO" id="GO:0019903">
    <property type="term" value="F:protein phosphatase binding"/>
    <property type="evidence" value="ECO:0000353"/>
    <property type="project" value="UniProtKB"/>
</dbReference>
<dbReference type="GO" id="GO:0061629">
    <property type="term" value="F:RNA polymerase II-specific DNA-binding transcription factor binding"/>
    <property type="evidence" value="ECO:0000314"/>
    <property type="project" value="MGI"/>
</dbReference>
<dbReference type="GO" id="GO:0005102">
    <property type="term" value="F:signaling receptor binding"/>
    <property type="evidence" value="ECO:0007669"/>
    <property type="project" value="Ensembl"/>
</dbReference>
<dbReference type="GO" id="GO:0003713">
    <property type="term" value="F:transcription coactivator activity"/>
    <property type="evidence" value="ECO:0000314"/>
    <property type="project" value="UniProtKB"/>
</dbReference>
<dbReference type="GO" id="GO:0001221">
    <property type="term" value="F:transcription coregulator binding"/>
    <property type="evidence" value="ECO:0000353"/>
    <property type="project" value="BHF-UCL"/>
</dbReference>
<dbReference type="GO" id="GO:0001222">
    <property type="term" value="F:transcription corepressor binding"/>
    <property type="evidence" value="ECO:0007669"/>
    <property type="project" value="Ensembl"/>
</dbReference>
<dbReference type="GO" id="GO:0044325">
    <property type="term" value="F:transmembrane transporter binding"/>
    <property type="evidence" value="ECO:0007669"/>
    <property type="project" value="Ensembl"/>
</dbReference>
<dbReference type="GO" id="GO:0090425">
    <property type="term" value="P:acinar cell differentiation"/>
    <property type="evidence" value="ECO:0000315"/>
    <property type="project" value="MGI"/>
</dbReference>
<dbReference type="GO" id="GO:0034333">
    <property type="term" value="P:adherens junction assembly"/>
    <property type="evidence" value="ECO:0000250"/>
    <property type="project" value="UniProtKB"/>
</dbReference>
<dbReference type="GO" id="GO:0034332">
    <property type="term" value="P:adherens junction organization"/>
    <property type="evidence" value="ECO:0000315"/>
    <property type="project" value="MGI"/>
</dbReference>
<dbReference type="GO" id="GO:0048513">
    <property type="term" value="P:animal organ development"/>
    <property type="evidence" value="ECO:0000315"/>
    <property type="project" value="MGI"/>
</dbReference>
<dbReference type="GO" id="GO:0009948">
    <property type="term" value="P:anterior/posterior axis specification"/>
    <property type="evidence" value="ECO:0000315"/>
    <property type="project" value="MGI"/>
</dbReference>
<dbReference type="GO" id="GO:0097190">
    <property type="term" value="P:apoptotic signaling pathway"/>
    <property type="evidence" value="ECO:0000315"/>
    <property type="project" value="MGI"/>
</dbReference>
<dbReference type="GO" id="GO:0036520">
    <property type="term" value="P:astrocyte-dopaminergic neuron signaling"/>
    <property type="evidence" value="ECO:0000315"/>
    <property type="project" value="ParkinsonsUK-UCL"/>
</dbReference>
<dbReference type="GO" id="GO:0045453">
    <property type="term" value="P:bone resorption"/>
    <property type="evidence" value="ECO:0000315"/>
    <property type="project" value="MGI"/>
</dbReference>
<dbReference type="GO" id="GO:0001569">
    <property type="term" value="P:branching involved in blood vessel morphogenesis"/>
    <property type="evidence" value="ECO:0000315"/>
    <property type="project" value="MGI"/>
</dbReference>
<dbReference type="GO" id="GO:0001658">
    <property type="term" value="P:branching involved in ureteric bud morphogenesis"/>
    <property type="evidence" value="ECO:0000315"/>
    <property type="project" value="MGI"/>
</dbReference>
<dbReference type="GO" id="GO:0060070">
    <property type="term" value="P:canonical Wnt signaling pathway"/>
    <property type="evidence" value="ECO:0000314"/>
    <property type="project" value="CAFA"/>
</dbReference>
<dbReference type="GO" id="GO:0044338">
    <property type="term" value="P:canonical Wnt signaling pathway involved in mesenchymal stem cell differentiation"/>
    <property type="evidence" value="ECO:0000315"/>
    <property type="project" value="MGI"/>
</dbReference>
<dbReference type="GO" id="GO:0060038">
    <property type="term" value="P:cardiac muscle cell proliferation"/>
    <property type="evidence" value="ECO:0000304"/>
    <property type="project" value="DFLAT"/>
</dbReference>
<dbReference type="GO" id="GO:0060947">
    <property type="term" value="P:cardiac vascular smooth muscle cell differentiation"/>
    <property type="evidence" value="ECO:0000304"/>
    <property type="project" value="DFLAT"/>
</dbReference>
<dbReference type="GO" id="GO:0007155">
    <property type="term" value="P:cell adhesion"/>
    <property type="evidence" value="ECO:0000250"/>
    <property type="project" value="UniProtKB"/>
</dbReference>
<dbReference type="GO" id="GO:0030154">
    <property type="term" value="P:cell differentiation"/>
    <property type="evidence" value="ECO:0000315"/>
    <property type="project" value="MGI"/>
</dbReference>
<dbReference type="GO" id="GO:0001708">
    <property type="term" value="P:cell fate specification"/>
    <property type="evidence" value="ECO:0000315"/>
    <property type="project" value="MGI"/>
</dbReference>
<dbReference type="GO" id="GO:0048469">
    <property type="term" value="P:cell maturation"/>
    <property type="evidence" value="ECO:0000314"/>
    <property type="project" value="MGI"/>
</dbReference>
<dbReference type="GO" id="GO:0000902">
    <property type="term" value="P:cell morphogenesis"/>
    <property type="evidence" value="ECO:0000315"/>
    <property type="project" value="MGI"/>
</dbReference>
<dbReference type="GO" id="GO:0008283">
    <property type="term" value="P:cell population proliferation"/>
    <property type="evidence" value="ECO:0000315"/>
    <property type="project" value="MGI"/>
</dbReference>
<dbReference type="GO" id="GO:0098609">
    <property type="term" value="P:cell-cell adhesion"/>
    <property type="evidence" value="ECO:0000315"/>
    <property type="project" value="MGI"/>
</dbReference>
<dbReference type="GO" id="GO:0044331">
    <property type="term" value="P:cell-cell adhesion mediated by cadherin"/>
    <property type="evidence" value="ECO:0007669"/>
    <property type="project" value="Ensembl"/>
</dbReference>
<dbReference type="GO" id="GO:0007160">
    <property type="term" value="P:cell-matrix adhesion"/>
    <property type="evidence" value="ECO:0000315"/>
    <property type="project" value="MGI"/>
</dbReference>
<dbReference type="GO" id="GO:0071363">
    <property type="term" value="P:cellular response to growth factor stimulus"/>
    <property type="evidence" value="ECO:0000250"/>
    <property type="project" value="UniProtKB"/>
</dbReference>
<dbReference type="GO" id="GO:0071681">
    <property type="term" value="P:cellular response to indole-3-methanol"/>
    <property type="evidence" value="ECO:0000250"/>
    <property type="project" value="UniProtKB"/>
</dbReference>
<dbReference type="GO" id="GO:0022009">
    <property type="term" value="P:central nervous system vasculogenesis"/>
    <property type="evidence" value="ECO:0000315"/>
    <property type="project" value="MGI"/>
</dbReference>
<dbReference type="GO" id="GO:0007268">
    <property type="term" value="P:chemical synaptic transmission"/>
    <property type="evidence" value="ECO:0000315"/>
    <property type="project" value="MGI"/>
</dbReference>
<dbReference type="GO" id="GO:0002062">
    <property type="term" value="P:chondrocyte differentiation"/>
    <property type="evidence" value="ECO:0000315"/>
    <property type="project" value="MGI"/>
</dbReference>
<dbReference type="GO" id="GO:0060982">
    <property type="term" value="P:coronary artery morphogenesis"/>
    <property type="evidence" value="ECO:0000304"/>
    <property type="project" value="DFLAT"/>
</dbReference>
<dbReference type="GO" id="GO:0061550">
    <property type="term" value="P:cranial ganglion development"/>
    <property type="evidence" value="ECO:0000315"/>
    <property type="project" value="ParkinsonsUK-UCL"/>
</dbReference>
<dbReference type="GO" id="GO:1904888">
    <property type="term" value="P:cranial skeletal system development"/>
    <property type="evidence" value="ECO:0000315"/>
    <property type="project" value="ParkinsonsUK-UCL"/>
</dbReference>
<dbReference type="GO" id="GO:0006351">
    <property type="term" value="P:DNA-templated transcription"/>
    <property type="evidence" value="ECO:0000315"/>
    <property type="project" value="MGI"/>
</dbReference>
<dbReference type="GO" id="GO:1990791">
    <property type="term" value="P:dorsal root ganglion development"/>
    <property type="evidence" value="ECO:0000315"/>
    <property type="project" value="ParkinsonsUK-UCL"/>
</dbReference>
<dbReference type="GO" id="GO:0009950">
    <property type="term" value="P:dorsal/ventral axis specification"/>
    <property type="evidence" value="ECO:0000315"/>
    <property type="project" value="MGI"/>
</dbReference>
<dbReference type="GO" id="GO:0009953">
    <property type="term" value="P:dorsal/ventral pattern formation"/>
    <property type="evidence" value="ECO:0000315"/>
    <property type="project" value="MGI"/>
</dbReference>
<dbReference type="GO" id="GO:0007398">
    <property type="term" value="P:ectoderm development"/>
    <property type="evidence" value="ECO:0000315"/>
    <property type="project" value="MGI"/>
</dbReference>
<dbReference type="GO" id="GO:0000578">
    <property type="term" value="P:embryonic axis specification"/>
    <property type="evidence" value="ECO:0000314"/>
    <property type="project" value="MGI"/>
</dbReference>
<dbReference type="GO" id="GO:1990403">
    <property type="term" value="P:embryonic brain development"/>
    <property type="evidence" value="ECO:0000315"/>
    <property type="project" value="ParkinsonsUK-UCL"/>
</dbReference>
<dbReference type="GO" id="GO:0042733">
    <property type="term" value="P:embryonic digit morphogenesis"/>
    <property type="evidence" value="ECO:0000315"/>
    <property type="project" value="MGI"/>
</dbReference>
<dbReference type="GO" id="GO:0048617">
    <property type="term" value="P:embryonic foregut morphogenesis"/>
    <property type="evidence" value="ECO:0000315"/>
    <property type="project" value="MGI"/>
</dbReference>
<dbReference type="GO" id="GO:0035115">
    <property type="term" value="P:embryonic forelimb morphogenesis"/>
    <property type="evidence" value="ECO:0000314"/>
    <property type="project" value="MGI"/>
</dbReference>
<dbReference type="GO" id="GO:0035050">
    <property type="term" value="P:embryonic heart tube development"/>
    <property type="evidence" value="ECO:0000315"/>
    <property type="project" value="MGI"/>
</dbReference>
<dbReference type="GO" id="GO:0035116">
    <property type="term" value="P:embryonic hindlimb morphogenesis"/>
    <property type="evidence" value="ECO:0000315"/>
    <property type="project" value="MGI"/>
</dbReference>
<dbReference type="GO" id="GO:0048568">
    <property type="term" value="P:embryonic organ development"/>
    <property type="evidence" value="ECO:0000315"/>
    <property type="project" value="MGI"/>
</dbReference>
<dbReference type="GO" id="GO:0036023">
    <property type="term" value="P:embryonic skeletal limb joint morphogenesis"/>
    <property type="evidence" value="ECO:0000316"/>
    <property type="project" value="BHF-UCL"/>
</dbReference>
<dbReference type="GO" id="GO:0001706">
    <property type="term" value="P:endoderm formation"/>
    <property type="evidence" value="ECO:0000315"/>
    <property type="project" value="MGI"/>
</dbReference>
<dbReference type="GO" id="GO:0001711">
    <property type="term" value="P:endodermal cell fate commitment"/>
    <property type="evidence" value="ECO:0000315"/>
    <property type="project" value="MGI"/>
</dbReference>
<dbReference type="GO" id="GO:0061154">
    <property type="term" value="P:endothelial tube morphogenesis"/>
    <property type="evidence" value="ECO:0000250"/>
    <property type="project" value="UniProtKB"/>
</dbReference>
<dbReference type="GO" id="GO:0060983">
    <property type="term" value="P:epicardium-derived cardiac vascular smooth muscle cell differentiation"/>
    <property type="evidence" value="ECO:0000304"/>
    <property type="project" value="DFLAT"/>
</dbReference>
<dbReference type="GO" id="GO:0007173">
    <property type="term" value="P:epidermal growth factor receptor signaling pathway"/>
    <property type="evidence" value="ECO:0007669"/>
    <property type="project" value="Ensembl"/>
</dbReference>
<dbReference type="GO" id="GO:0030855">
    <property type="term" value="P:epithelial cell differentiation"/>
    <property type="evidence" value="ECO:0000315"/>
    <property type="project" value="MGI"/>
</dbReference>
<dbReference type="GO" id="GO:0060742">
    <property type="term" value="P:epithelial cell differentiation involved in prostate gland development"/>
    <property type="evidence" value="ECO:0000315"/>
    <property type="project" value="MGI"/>
</dbReference>
<dbReference type="GO" id="GO:0060767">
    <property type="term" value="P:epithelial cell proliferation involved in prostate gland development"/>
    <property type="evidence" value="ECO:0000315"/>
    <property type="project" value="MGI"/>
</dbReference>
<dbReference type="GO" id="GO:0060441">
    <property type="term" value="P:epithelial tube branching involved in lung morphogenesis"/>
    <property type="evidence" value="ECO:0000315"/>
    <property type="project" value="MGI"/>
</dbReference>
<dbReference type="GO" id="GO:0060856">
    <property type="term" value="P:establishment of blood-brain barrier"/>
    <property type="evidence" value="ECO:0000315"/>
    <property type="project" value="MGI"/>
</dbReference>
<dbReference type="GO" id="GO:1990963">
    <property type="term" value="P:establishment of blood-retinal barrier"/>
    <property type="evidence" value="ECO:0000315"/>
    <property type="project" value="MGI"/>
</dbReference>
<dbReference type="GO" id="GO:0008543">
    <property type="term" value="P:fibroblast growth factor receptor signaling pathway"/>
    <property type="evidence" value="ECO:0000315"/>
    <property type="project" value="MGI"/>
</dbReference>
<dbReference type="GO" id="GO:0030900">
    <property type="term" value="P:forebrain development"/>
    <property type="evidence" value="ECO:0000315"/>
    <property type="project" value="MGI"/>
</dbReference>
<dbReference type="GO" id="GO:0061198">
    <property type="term" value="P:fungiform papilla formation"/>
    <property type="evidence" value="ECO:0000315"/>
    <property type="project" value="MGI"/>
</dbReference>
<dbReference type="GO" id="GO:0001702">
    <property type="term" value="P:gastrulation with mouth forming second"/>
    <property type="evidence" value="ECO:0000315"/>
    <property type="project" value="MGI"/>
</dbReference>
<dbReference type="GO" id="GO:0010467">
    <property type="term" value="P:gene expression"/>
    <property type="evidence" value="ECO:0000315"/>
    <property type="project" value="MGI"/>
</dbReference>
<dbReference type="GO" id="GO:0035112">
    <property type="term" value="P:genitalia morphogenesis"/>
    <property type="evidence" value="ECO:0000315"/>
    <property type="project" value="MGI"/>
</dbReference>
<dbReference type="GO" id="GO:0007403">
    <property type="term" value="P:glial cell fate determination"/>
    <property type="evidence" value="ECO:0000314"/>
    <property type="project" value="MGI"/>
</dbReference>
<dbReference type="GO" id="GO:0022405">
    <property type="term" value="P:hair cycle process"/>
    <property type="evidence" value="ECO:0000315"/>
    <property type="project" value="MGI"/>
</dbReference>
<dbReference type="GO" id="GO:0031069">
    <property type="term" value="P:hair follicle morphogenesis"/>
    <property type="evidence" value="ECO:0000315"/>
    <property type="project" value="MGI"/>
</dbReference>
<dbReference type="GO" id="GO:0060789">
    <property type="term" value="P:hair follicle placode formation"/>
    <property type="evidence" value="ECO:0000315"/>
    <property type="project" value="MGI"/>
</dbReference>
<dbReference type="GO" id="GO:0007507">
    <property type="term" value="P:heart development"/>
    <property type="evidence" value="ECO:0000315"/>
    <property type="project" value="MGI"/>
</dbReference>
<dbReference type="GO" id="GO:0030097">
    <property type="term" value="P:hemopoiesis"/>
    <property type="evidence" value="ECO:0000314"/>
    <property type="project" value="MGI"/>
</dbReference>
<dbReference type="GO" id="GO:0030902">
    <property type="term" value="P:hindbrain development"/>
    <property type="evidence" value="ECO:0000315"/>
    <property type="project" value="ParkinsonsUK-UCL"/>
</dbReference>
<dbReference type="GO" id="GO:0021854">
    <property type="term" value="P:hypothalamus development"/>
    <property type="evidence" value="ECO:0000315"/>
    <property type="project" value="MGI"/>
</dbReference>
<dbReference type="GO" id="GO:0001701">
    <property type="term" value="P:in utero embryonic development"/>
    <property type="evidence" value="ECO:0000315"/>
    <property type="project" value="MGI"/>
</dbReference>
<dbReference type="GO" id="GO:0001822">
    <property type="term" value="P:kidney development"/>
    <property type="evidence" value="ECO:0000315"/>
    <property type="project" value="MGI"/>
</dbReference>
<dbReference type="GO" id="GO:0021819">
    <property type="term" value="P:layer formation in cerebral cortex"/>
    <property type="evidence" value="ECO:0000315"/>
    <property type="project" value="MGI"/>
</dbReference>
<dbReference type="GO" id="GO:0002089">
    <property type="term" value="P:lens morphogenesis in camera-type eye"/>
    <property type="evidence" value="ECO:0000315"/>
    <property type="project" value="MGI"/>
</dbReference>
<dbReference type="GO" id="GO:0060173">
    <property type="term" value="P:limb development"/>
    <property type="evidence" value="ECO:0000315"/>
    <property type="project" value="MGI"/>
</dbReference>
<dbReference type="GO" id="GO:0060479">
    <property type="term" value="P:lung cell differentiation"/>
    <property type="evidence" value="ECO:0000315"/>
    <property type="project" value="MGI"/>
</dbReference>
<dbReference type="GO" id="GO:0030324">
    <property type="term" value="P:lung development"/>
    <property type="evidence" value="ECO:0000315"/>
    <property type="project" value="MGI"/>
</dbReference>
<dbReference type="GO" id="GO:0060487">
    <property type="term" value="P:lung epithelial cell differentiation"/>
    <property type="evidence" value="ECO:0000315"/>
    <property type="project" value="MGI"/>
</dbReference>
<dbReference type="GO" id="GO:0060492">
    <property type="term" value="P:lung induction"/>
    <property type="evidence" value="ECO:0000315"/>
    <property type="project" value="MGI"/>
</dbReference>
<dbReference type="GO" id="GO:0060484">
    <property type="term" value="P:lung-associated mesenchyme development"/>
    <property type="evidence" value="ECO:0000315"/>
    <property type="project" value="MGI"/>
</dbReference>
<dbReference type="GO" id="GO:0030539">
    <property type="term" value="P:male genitalia development"/>
    <property type="evidence" value="ECO:0000315"/>
    <property type="project" value="MGI"/>
</dbReference>
<dbReference type="GO" id="GO:0000165">
    <property type="term" value="P:MAPK cascade"/>
    <property type="evidence" value="ECO:0000316"/>
    <property type="project" value="MGI"/>
</dbReference>
<dbReference type="GO" id="GO:0010463">
    <property type="term" value="P:mesenchymal cell proliferation"/>
    <property type="evidence" value="ECO:0000315"/>
    <property type="project" value="MGI"/>
</dbReference>
<dbReference type="GO" id="GO:0060916">
    <property type="term" value="P:mesenchymal cell proliferation involved in lung development"/>
    <property type="evidence" value="ECO:0000315"/>
    <property type="project" value="MGI"/>
</dbReference>
<dbReference type="GO" id="GO:0072497">
    <property type="term" value="P:mesenchymal stem cell differentiation"/>
    <property type="evidence" value="ECO:0000315"/>
    <property type="project" value="MGI"/>
</dbReference>
<dbReference type="GO" id="GO:0060231">
    <property type="term" value="P:mesenchymal to epithelial transition"/>
    <property type="evidence" value="ECO:0000250"/>
    <property type="project" value="UniProtKB"/>
</dbReference>
<dbReference type="GO" id="GO:0060485">
    <property type="term" value="P:mesenchyme development"/>
    <property type="evidence" value="ECO:0000304"/>
    <property type="project" value="DFLAT"/>
</dbReference>
<dbReference type="GO" id="GO:0072132">
    <property type="term" value="P:mesenchyme morphogenesis"/>
    <property type="evidence" value="ECO:0000304"/>
    <property type="project" value="DFLAT"/>
</dbReference>
<dbReference type="GO" id="GO:0003338">
    <property type="term" value="P:metanephros morphogenesis"/>
    <property type="evidence" value="ECO:0000315"/>
    <property type="project" value="MGI"/>
</dbReference>
<dbReference type="GO" id="GO:0030901">
    <property type="term" value="P:midbrain development"/>
    <property type="evidence" value="ECO:0000315"/>
    <property type="project" value="ParkinsonsUK-UCL"/>
</dbReference>
<dbReference type="GO" id="GO:1904948">
    <property type="term" value="P:midbrain dopaminergic neuron differentiation"/>
    <property type="evidence" value="ECO:0000315"/>
    <property type="project" value="ParkinsonsUK-UCL"/>
</dbReference>
<dbReference type="GO" id="GO:0016331">
    <property type="term" value="P:morphogenesis of embryonic epithelium"/>
    <property type="evidence" value="ECO:0000315"/>
    <property type="project" value="MGI"/>
</dbReference>
<dbReference type="GO" id="GO:0051450">
    <property type="term" value="P:myoblast proliferation"/>
    <property type="evidence" value="ECO:0000315"/>
    <property type="project" value="MGI"/>
</dbReference>
<dbReference type="GO" id="GO:0016525">
    <property type="term" value="P:negative regulation of angiogenesis"/>
    <property type="evidence" value="ECO:0000315"/>
    <property type="project" value="BHF-UCL"/>
</dbReference>
<dbReference type="GO" id="GO:2001234">
    <property type="term" value="P:negative regulation of apoptotic signaling pathway"/>
    <property type="evidence" value="ECO:0000315"/>
    <property type="project" value="MGI"/>
</dbReference>
<dbReference type="GO" id="GO:0090090">
    <property type="term" value="P:negative regulation of canonical Wnt signaling pathway"/>
    <property type="evidence" value="ECO:0000314"/>
    <property type="project" value="ComplexPortal"/>
</dbReference>
<dbReference type="GO" id="GO:0045596">
    <property type="term" value="P:negative regulation of cell differentiation"/>
    <property type="evidence" value="ECO:0000315"/>
    <property type="project" value="MGI"/>
</dbReference>
<dbReference type="GO" id="GO:0008285">
    <property type="term" value="P:negative regulation of cell population proliferation"/>
    <property type="evidence" value="ECO:0000250"/>
    <property type="project" value="UniProtKB"/>
</dbReference>
<dbReference type="GO" id="GO:0032331">
    <property type="term" value="P:negative regulation of chondrocyte differentiation"/>
    <property type="evidence" value="ECO:0000315"/>
    <property type="project" value="MGI"/>
</dbReference>
<dbReference type="GO" id="GO:0045892">
    <property type="term" value="P:negative regulation of DNA-templated transcription"/>
    <property type="evidence" value="ECO:0000314"/>
    <property type="project" value="MGI"/>
</dbReference>
<dbReference type="GO" id="GO:0010629">
    <property type="term" value="P:negative regulation of gene expression"/>
    <property type="evidence" value="ECO:0000315"/>
    <property type="project" value="ParkinsonsUK-UCL"/>
</dbReference>
<dbReference type="GO" id="GO:0003340">
    <property type="term" value="P:negative regulation of mesenchymal to epithelial transition involved in metanephros morphogenesis"/>
    <property type="evidence" value="ECO:0000314"/>
    <property type="project" value="MGI"/>
</dbReference>
<dbReference type="GO" id="GO:0045976">
    <property type="term" value="P:negative regulation of mitotic cell cycle, embryonic"/>
    <property type="evidence" value="ECO:0000315"/>
    <property type="project" value="UniProtKB"/>
</dbReference>
<dbReference type="GO" id="GO:0050768">
    <property type="term" value="P:negative regulation of neurogenesis"/>
    <property type="evidence" value="ECO:0000315"/>
    <property type="project" value="UniProtKB"/>
</dbReference>
<dbReference type="GO" id="GO:0043524">
    <property type="term" value="P:negative regulation of neuron apoptotic process"/>
    <property type="evidence" value="ECO:0000316"/>
    <property type="project" value="MGI"/>
</dbReference>
<dbReference type="GO" id="GO:0048715">
    <property type="term" value="P:negative regulation of oligodendrocyte differentiation"/>
    <property type="evidence" value="ECO:0000315"/>
    <property type="project" value="MGI"/>
</dbReference>
<dbReference type="GO" id="GO:0045671">
    <property type="term" value="P:negative regulation of osteoclast differentiation"/>
    <property type="evidence" value="ECO:0000315"/>
    <property type="project" value="MGI"/>
</dbReference>
<dbReference type="GO" id="GO:1903377">
    <property type="term" value="P:negative regulation of oxidative stress-induced neuron intrinsic apoptotic signaling pathway"/>
    <property type="evidence" value="ECO:0000315"/>
    <property type="project" value="ParkinsonsUK-UCL"/>
</dbReference>
<dbReference type="GO" id="GO:0033234">
    <property type="term" value="P:negative regulation of protein sumoylation"/>
    <property type="evidence" value="ECO:0000250"/>
    <property type="project" value="UniProtKB"/>
</dbReference>
<dbReference type="GO" id="GO:0000122">
    <property type="term" value="P:negative regulation of transcription by RNA polymerase II"/>
    <property type="evidence" value="ECO:0000314"/>
    <property type="project" value="ComplexPortal"/>
</dbReference>
<dbReference type="GO" id="GO:0072079">
    <property type="term" value="P:nephron tubule formation"/>
    <property type="evidence" value="ECO:0000315"/>
    <property type="project" value="MGI"/>
</dbReference>
<dbReference type="GO" id="GO:0001840">
    <property type="term" value="P:neural plate development"/>
    <property type="evidence" value="ECO:0000314"/>
    <property type="project" value="MGI"/>
</dbReference>
<dbReference type="GO" id="GO:0007405">
    <property type="term" value="P:neuroblast proliferation"/>
    <property type="evidence" value="ECO:0000316"/>
    <property type="project" value="MGI"/>
</dbReference>
<dbReference type="GO" id="GO:0030182">
    <property type="term" value="P:neuron differentiation"/>
    <property type="evidence" value="ECO:0000315"/>
    <property type="project" value="ParkinsonsUK-UCL"/>
</dbReference>
<dbReference type="GO" id="GO:0048664">
    <property type="term" value="P:neuron fate determination"/>
    <property type="evidence" value="ECO:0000315"/>
    <property type="project" value="MGI"/>
</dbReference>
<dbReference type="GO" id="GO:0001764">
    <property type="term" value="P:neuron migration"/>
    <property type="evidence" value="ECO:0000316"/>
    <property type="project" value="MGI"/>
</dbReference>
<dbReference type="GO" id="GO:1990138">
    <property type="term" value="P:neuron projection extension"/>
    <property type="evidence" value="ECO:0000250"/>
    <property type="project" value="UniProtKB"/>
</dbReference>
<dbReference type="GO" id="GO:0042475">
    <property type="term" value="P:odontogenesis of dentin-containing tooth"/>
    <property type="evidence" value="ECO:0000315"/>
    <property type="project" value="MGI"/>
</dbReference>
<dbReference type="GO" id="GO:0048709">
    <property type="term" value="P:oligodendrocyte differentiation"/>
    <property type="evidence" value="ECO:0000315"/>
    <property type="project" value="MGI"/>
</dbReference>
<dbReference type="GO" id="GO:0048599">
    <property type="term" value="P:oocyte development"/>
    <property type="evidence" value="ECO:0000316"/>
    <property type="project" value="MGI"/>
</dbReference>
<dbReference type="GO" id="GO:0001649">
    <property type="term" value="P:osteoblast differentiation"/>
    <property type="evidence" value="ECO:0000315"/>
    <property type="project" value="MGI"/>
</dbReference>
<dbReference type="GO" id="GO:0030316">
    <property type="term" value="P:osteoclast differentiation"/>
    <property type="evidence" value="ECO:0000315"/>
    <property type="project" value="MGI"/>
</dbReference>
<dbReference type="GO" id="GO:0003151">
    <property type="term" value="P:outflow tract morphogenesis"/>
    <property type="evidence" value="ECO:0000315"/>
    <property type="project" value="BHF-UCL"/>
</dbReference>
<dbReference type="GO" id="GO:0060066">
    <property type="term" value="P:oviduct development"/>
    <property type="evidence" value="ECO:0000315"/>
    <property type="project" value="MGI"/>
</dbReference>
<dbReference type="GO" id="GO:0031016">
    <property type="term" value="P:pancreas development"/>
    <property type="evidence" value="ECO:0000315"/>
    <property type="project" value="MGI"/>
</dbReference>
<dbReference type="GO" id="GO:0043065">
    <property type="term" value="P:positive regulation of apoptotic process"/>
    <property type="evidence" value="ECO:0000250"/>
    <property type="project" value="UniProtKB"/>
</dbReference>
<dbReference type="GO" id="GO:1905555">
    <property type="term" value="P:positive regulation of blood vessel branching"/>
    <property type="evidence" value="ECO:0007669"/>
    <property type="project" value="Ensembl"/>
</dbReference>
<dbReference type="GO" id="GO:0061047">
    <property type="term" value="P:positive regulation of branching involved in lung morphogenesis"/>
    <property type="evidence" value="ECO:0000315"/>
    <property type="project" value="MGI"/>
</dbReference>
<dbReference type="GO" id="GO:0045597">
    <property type="term" value="P:positive regulation of cell differentiation"/>
    <property type="evidence" value="ECO:0000303"/>
    <property type="project" value="ComplexPortal"/>
</dbReference>
<dbReference type="GO" id="GO:0008284">
    <property type="term" value="P:positive regulation of cell population proliferation"/>
    <property type="evidence" value="ECO:0000315"/>
    <property type="project" value="BHF-UCL"/>
</dbReference>
<dbReference type="GO" id="GO:2000017">
    <property type="term" value="P:positive regulation of determination of dorsal identity"/>
    <property type="evidence" value="ECO:0000314"/>
    <property type="project" value="MGI"/>
</dbReference>
<dbReference type="GO" id="GO:0045893">
    <property type="term" value="P:positive regulation of DNA-templated transcription"/>
    <property type="evidence" value="ECO:0000314"/>
    <property type="project" value="UniProtKB"/>
</dbReference>
<dbReference type="GO" id="GO:0045603">
    <property type="term" value="P:positive regulation of endothelial cell differentiation"/>
    <property type="evidence" value="ECO:0000315"/>
    <property type="project" value="MGI"/>
</dbReference>
<dbReference type="GO" id="GO:0030858">
    <property type="term" value="P:positive regulation of epithelial cell differentiation"/>
    <property type="evidence" value="ECO:0000315"/>
    <property type="project" value="MGI"/>
</dbReference>
<dbReference type="GO" id="GO:0060769">
    <property type="term" value="P:positive regulation of epithelial cell proliferation involved in prostate gland development"/>
    <property type="evidence" value="ECO:0000315"/>
    <property type="project" value="MGI"/>
</dbReference>
<dbReference type="GO" id="GO:0010718">
    <property type="term" value="P:positive regulation of epithelial to mesenchymal transition"/>
    <property type="evidence" value="ECO:0000266"/>
    <property type="project" value="MGI"/>
</dbReference>
<dbReference type="GO" id="GO:0045743">
    <property type="term" value="P:positive regulation of fibroblast growth factor receptor signaling pathway"/>
    <property type="evidence" value="ECO:0000315"/>
    <property type="project" value="MGI"/>
</dbReference>
<dbReference type="GO" id="GO:0010628">
    <property type="term" value="P:positive regulation of gene expression"/>
    <property type="evidence" value="ECO:0000315"/>
    <property type="project" value="MGI"/>
</dbReference>
<dbReference type="GO" id="GO:0010909">
    <property type="term" value="P:positive regulation of heparan sulfate proteoglycan biosynthetic process"/>
    <property type="evidence" value="ECO:0000250"/>
    <property type="project" value="UniProtKB"/>
</dbReference>
<dbReference type="GO" id="GO:0034112">
    <property type="term" value="P:positive regulation of homotypic cell-cell adhesion"/>
    <property type="evidence" value="ECO:0007669"/>
    <property type="project" value="Ensembl"/>
</dbReference>
<dbReference type="GO" id="GO:0043410">
    <property type="term" value="P:positive regulation of MAPK cascade"/>
    <property type="evidence" value="ECO:0000316"/>
    <property type="project" value="MGI"/>
</dbReference>
<dbReference type="GO" id="GO:0002053">
    <property type="term" value="P:positive regulation of mesenchymal cell proliferation"/>
    <property type="evidence" value="ECO:0000315"/>
    <property type="project" value="MGI"/>
</dbReference>
<dbReference type="GO" id="GO:2000288">
    <property type="term" value="P:positive regulation of myoblast proliferation"/>
    <property type="evidence" value="ECO:0000315"/>
    <property type="project" value="MGI"/>
</dbReference>
<dbReference type="GO" id="GO:2000179">
    <property type="term" value="P:positive regulation of neural precursor cell proliferation"/>
    <property type="evidence" value="ECO:0000315"/>
    <property type="project" value="UniProtKB"/>
</dbReference>
<dbReference type="GO" id="GO:0002052">
    <property type="term" value="P:positive regulation of neuroblast proliferation"/>
    <property type="evidence" value="ECO:0000315"/>
    <property type="project" value="UniProtKB"/>
</dbReference>
<dbReference type="GO" id="GO:0043525">
    <property type="term" value="P:positive regulation of neuron apoptotic process"/>
    <property type="evidence" value="ECO:0007669"/>
    <property type="project" value="Ensembl"/>
</dbReference>
<dbReference type="GO" id="GO:1901331">
    <property type="term" value="P:positive regulation of odontoblast differentiation"/>
    <property type="evidence" value="ECO:0000315"/>
    <property type="project" value="UniProtKB"/>
</dbReference>
<dbReference type="GO" id="GO:0045669">
    <property type="term" value="P:positive regulation of osteoblast differentiation"/>
    <property type="evidence" value="ECO:0000315"/>
    <property type="project" value="MGI"/>
</dbReference>
<dbReference type="GO" id="GO:0048643">
    <property type="term" value="P:positive regulation of skeletal muscle tissue development"/>
    <property type="evidence" value="ECO:0000315"/>
    <property type="project" value="CACAO"/>
</dbReference>
<dbReference type="GO" id="GO:2000648">
    <property type="term" value="P:positive regulation of stem cell proliferation"/>
    <property type="evidence" value="ECO:0000315"/>
    <property type="project" value="MGI"/>
</dbReference>
<dbReference type="GO" id="GO:0032212">
    <property type="term" value="P:positive regulation of telomere maintenance via telomerase"/>
    <property type="evidence" value="ECO:0000315"/>
    <property type="project" value="BHF-UCL"/>
</dbReference>
<dbReference type="GO" id="GO:0045944">
    <property type="term" value="P:positive regulation of transcription by RNA polymerase II"/>
    <property type="evidence" value="ECO:0000314"/>
    <property type="project" value="MGI"/>
</dbReference>
<dbReference type="GO" id="GO:0032968">
    <property type="term" value="P:positive regulation of transcription elongation by RNA polymerase II"/>
    <property type="evidence" value="ECO:0000315"/>
    <property type="project" value="MGI"/>
</dbReference>
<dbReference type="GO" id="GO:0043161">
    <property type="term" value="P:proteasome-mediated ubiquitin-dependent protein catabolic process"/>
    <property type="evidence" value="ECO:0007669"/>
    <property type="project" value="Ensembl"/>
</dbReference>
<dbReference type="GO" id="GO:0008104">
    <property type="term" value="P:protein localization"/>
    <property type="evidence" value="ECO:0000315"/>
    <property type="project" value="MGI"/>
</dbReference>
<dbReference type="GO" id="GO:0034394">
    <property type="term" value="P:protein localization to cell surface"/>
    <property type="evidence" value="ECO:0000250"/>
    <property type="project" value="UniProtKB"/>
</dbReference>
<dbReference type="GO" id="GO:0000209">
    <property type="term" value="P:protein polyubiquitination"/>
    <property type="evidence" value="ECO:0007669"/>
    <property type="project" value="Ensembl"/>
</dbReference>
<dbReference type="GO" id="GO:0009954">
    <property type="term" value="P:proximal/distal pattern formation"/>
    <property type="evidence" value="ECO:0000315"/>
    <property type="project" value="MGI"/>
</dbReference>
<dbReference type="GO" id="GO:0042981">
    <property type="term" value="P:regulation of apoptotic process"/>
    <property type="evidence" value="ECO:0000315"/>
    <property type="project" value="MGI"/>
</dbReference>
<dbReference type="GO" id="GO:0090279">
    <property type="term" value="P:regulation of calcium ion import"/>
    <property type="evidence" value="ECO:0000250"/>
    <property type="project" value="UniProtKB"/>
</dbReference>
<dbReference type="GO" id="GO:0045595">
    <property type="term" value="P:regulation of cell differentiation"/>
    <property type="evidence" value="ECO:0000314"/>
    <property type="project" value="MGI"/>
</dbReference>
<dbReference type="GO" id="GO:0042127">
    <property type="term" value="P:regulation of cell population proliferation"/>
    <property type="evidence" value="ECO:0000314"/>
    <property type="project" value="MGI"/>
</dbReference>
<dbReference type="GO" id="GO:0030997">
    <property type="term" value="P:regulation of centriole-centriole cohesion"/>
    <property type="evidence" value="ECO:0000250"/>
    <property type="project" value="UniProtKB"/>
</dbReference>
<dbReference type="GO" id="GO:0070602">
    <property type="term" value="P:regulation of centromeric sister chromatid cohesion"/>
    <property type="evidence" value="ECO:0000315"/>
    <property type="project" value="BHF-UCL"/>
</dbReference>
<dbReference type="GO" id="GO:0030856">
    <property type="term" value="P:regulation of epithelial cell differentiation"/>
    <property type="evidence" value="ECO:0000315"/>
    <property type="project" value="MGI"/>
</dbReference>
<dbReference type="GO" id="GO:0010717">
    <property type="term" value="P:regulation of epithelial to mesenchymal transition"/>
    <property type="evidence" value="ECO:0000250"/>
    <property type="project" value="UniProtKB"/>
</dbReference>
<dbReference type="GO" id="GO:0010468">
    <property type="term" value="P:regulation of gene expression"/>
    <property type="evidence" value="ECO:0000315"/>
    <property type="project" value="MGI"/>
</dbReference>
<dbReference type="GO" id="GO:0031641">
    <property type="term" value="P:regulation of myelination"/>
    <property type="evidence" value="ECO:0000315"/>
    <property type="project" value="MGI"/>
</dbReference>
<dbReference type="GO" id="GO:0072182">
    <property type="term" value="P:regulation of nephron tubule epithelial cell differentiation"/>
    <property type="evidence" value="ECO:0000315"/>
    <property type="project" value="UniProtKB"/>
</dbReference>
<dbReference type="GO" id="GO:0050767">
    <property type="term" value="P:regulation of neurogenesis"/>
    <property type="evidence" value="ECO:0000303"/>
    <property type="project" value="ComplexPortal"/>
</dbReference>
<dbReference type="GO" id="GO:0045667">
    <property type="term" value="P:regulation of osteoblast differentiation"/>
    <property type="evidence" value="ECO:0000315"/>
    <property type="project" value="MGI"/>
</dbReference>
<dbReference type="GO" id="GO:0045670">
    <property type="term" value="P:regulation of osteoclast differentiation"/>
    <property type="evidence" value="ECO:0000315"/>
    <property type="project" value="MGI"/>
</dbReference>
<dbReference type="GO" id="GO:2000008">
    <property type="term" value="P:regulation of protein localization to cell surface"/>
    <property type="evidence" value="ECO:0000250"/>
    <property type="project" value="UniProtKB"/>
</dbReference>
<dbReference type="GO" id="GO:0031396">
    <property type="term" value="P:regulation of protein ubiquitination"/>
    <property type="evidence" value="ECO:0007669"/>
    <property type="project" value="Ensembl"/>
</dbReference>
<dbReference type="GO" id="GO:0003266">
    <property type="term" value="P:regulation of secondary heart field cardioblast proliferation"/>
    <property type="evidence" value="ECO:0000314"/>
    <property type="project" value="MGI"/>
</dbReference>
<dbReference type="GO" id="GO:0048660">
    <property type="term" value="P:regulation of smooth muscle cell proliferation"/>
    <property type="evidence" value="ECO:0000250"/>
    <property type="project" value="UniProtKB"/>
</dbReference>
<dbReference type="GO" id="GO:0051963">
    <property type="term" value="P:regulation of synapse assembly"/>
    <property type="evidence" value="ECO:0000314"/>
    <property type="project" value="SynGO"/>
</dbReference>
<dbReference type="GO" id="GO:0042129">
    <property type="term" value="P:regulation of T cell proliferation"/>
    <property type="evidence" value="ECO:0000315"/>
    <property type="project" value="MGI"/>
</dbReference>
<dbReference type="GO" id="GO:0051884">
    <property type="term" value="P:regulation of timing of anagen"/>
    <property type="evidence" value="ECO:0000314"/>
    <property type="project" value="CAFA"/>
</dbReference>
<dbReference type="GO" id="GO:0006357">
    <property type="term" value="P:regulation of transcription by RNA polymerase II"/>
    <property type="evidence" value="ECO:0000314"/>
    <property type="project" value="MGI"/>
</dbReference>
<dbReference type="GO" id="GO:0072053">
    <property type="term" value="P:renal inner medulla development"/>
    <property type="evidence" value="ECO:0000315"/>
    <property type="project" value="MGI"/>
</dbReference>
<dbReference type="GO" id="GO:0072054">
    <property type="term" value="P:renal outer medulla development"/>
    <property type="evidence" value="ECO:0000315"/>
    <property type="project" value="MGI"/>
</dbReference>
<dbReference type="GO" id="GO:0072033">
    <property type="term" value="P:renal vesicle formation"/>
    <property type="evidence" value="ECO:0000315"/>
    <property type="project" value="MGI"/>
</dbReference>
<dbReference type="GO" id="GO:0032355">
    <property type="term" value="P:response to estradiol"/>
    <property type="evidence" value="ECO:0000250"/>
    <property type="project" value="UniProtKB"/>
</dbReference>
<dbReference type="GO" id="GO:0009410">
    <property type="term" value="P:response to xenobiotic stimulus"/>
    <property type="evidence" value="ECO:0007669"/>
    <property type="project" value="Ensembl"/>
</dbReference>
<dbReference type="GO" id="GO:0001501">
    <property type="term" value="P:skeletal system development"/>
    <property type="evidence" value="ECO:0000315"/>
    <property type="project" value="MGI"/>
</dbReference>
<dbReference type="GO" id="GO:0043588">
    <property type="term" value="P:skin development"/>
    <property type="evidence" value="ECO:0000315"/>
    <property type="project" value="MGI"/>
</dbReference>
<dbReference type="GO" id="GO:0051145">
    <property type="term" value="P:smooth muscle cell differentiation"/>
    <property type="evidence" value="ECO:0000315"/>
    <property type="project" value="MGI"/>
</dbReference>
<dbReference type="GO" id="GO:0072089">
    <property type="term" value="P:stem cell proliferation"/>
    <property type="evidence" value="ECO:0000315"/>
    <property type="project" value="MGI"/>
</dbReference>
<dbReference type="GO" id="GO:0061549">
    <property type="term" value="P:sympathetic ganglion development"/>
    <property type="evidence" value="ECO:0000315"/>
    <property type="project" value="UniProtKB"/>
</dbReference>
<dbReference type="GO" id="GO:0050808">
    <property type="term" value="P:synapse organization"/>
    <property type="evidence" value="ECO:0000315"/>
    <property type="project" value="MGI"/>
</dbReference>
<dbReference type="GO" id="GO:0097091">
    <property type="term" value="P:synaptic vesicle clustering"/>
    <property type="evidence" value="ECO:0000314"/>
    <property type="project" value="SynGO"/>
</dbReference>
<dbReference type="GO" id="GO:0048489">
    <property type="term" value="P:synaptic vesicle transport"/>
    <property type="evidence" value="ECO:0000315"/>
    <property type="project" value="MGI"/>
</dbReference>
<dbReference type="GO" id="GO:0030217">
    <property type="term" value="P:T cell differentiation"/>
    <property type="evidence" value="ECO:0000315"/>
    <property type="project" value="MGI"/>
</dbReference>
<dbReference type="GO" id="GO:0033077">
    <property type="term" value="P:T cell differentiation in thymus"/>
    <property type="evidence" value="ECO:0000315"/>
    <property type="project" value="MGI"/>
</dbReference>
<dbReference type="GO" id="GO:0048538">
    <property type="term" value="P:thymus development"/>
    <property type="evidence" value="ECO:0000315"/>
    <property type="project" value="MGI"/>
</dbReference>
<dbReference type="GO" id="GO:0001894">
    <property type="term" value="P:tissue homeostasis"/>
    <property type="evidence" value="ECO:0000315"/>
    <property type="project" value="MGI"/>
</dbReference>
<dbReference type="GO" id="GO:0060440">
    <property type="term" value="P:trachea formation"/>
    <property type="evidence" value="ECO:0000315"/>
    <property type="project" value="MGI"/>
</dbReference>
<dbReference type="GO" id="GO:0060439">
    <property type="term" value="P:trachea morphogenesis"/>
    <property type="evidence" value="ECO:0000315"/>
    <property type="project" value="MGI"/>
</dbReference>
<dbReference type="GO" id="GO:0006366">
    <property type="term" value="P:transcription by RNA polymerase II"/>
    <property type="evidence" value="ECO:0000314"/>
    <property type="project" value="MGI"/>
</dbReference>
<dbReference type="GO" id="GO:0001944">
    <property type="term" value="P:vasculature development"/>
    <property type="evidence" value="ECO:0000315"/>
    <property type="project" value="MGI"/>
</dbReference>
<dbReference type="GO" id="GO:0001570">
    <property type="term" value="P:vasculogenesis"/>
    <property type="evidence" value="ECO:0000315"/>
    <property type="project" value="MGI"/>
</dbReference>
<dbReference type="GO" id="GO:0003223">
    <property type="term" value="P:ventricular compact myocardium morphogenesis"/>
    <property type="evidence" value="ECO:0000304"/>
    <property type="project" value="DFLAT"/>
</dbReference>
<dbReference type="CDD" id="cd21724">
    <property type="entry name" value="CTNNAbd_CTNNB1"/>
    <property type="match status" value="1"/>
</dbReference>
<dbReference type="DisProt" id="DP00341"/>
<dbReference type="FunFam" id="1.25.10.10:FF:000015">
    <property type="entry name" value="Catenin beta-1"/>
    <property type="match status" value="1"/>
</dbReference>
<dbReference type="Gene3D" id="1.25.10.10">
    <property type="entry name" value="Leucine-rich Repeat Variant"/>
    <property type="match status" value="1"/>
</dbReference>
<dbReference type="IDEAL" id="IID50011"/>
<dbReference type="InterPro" id="IPR011989">
    <property type="entry name" value="ARM-like"/>
</dbReference>
<dbReference type="InterPro" id="IPR016024">
    <property type="entry name" value="ARM-type_fold"/>
</dbReference>
<dbReference type="InterPro" id="IPR000225">
    <property type="entry name" value="Armadillo"/>
</dbReference>
<dbReference type="InterPro" id="IPR013284">
    <property type="entry name" value="Beta-catenin"/>
</dbReference>
<dbReference type="PANTHER" id="PTHR45976">
    <property type="entry name" value="ARMADILLO SEGMENT POLARITY PROTEIN"/>
    <property type="match status" value="1"/>
</dbReference>
<dbReference type="Pfam" id="PF00514">
    <property type="entry name" value="Arm"/>
    <property type="match status" value="4"/>
</dbReference>
<dbReference type="PRINTS" id="PR01869">
    <property type="entry name" value="BCATNINFAMLY"/>
</dbReference>
<dbReference type="SMART" id="SM00185">
    <property type="entry name" value="ARM"/>
    <property type="match status" value="12"/>
</dbReference>
<dbReference type="SUPFAM" id="SSF48371">
    <property type="entry name" value="ARM repeat"/>
    <property type="match status" value="1"/>
</dbReference>
<dbReference type="PROSITE" id="PS50176">
    <property type="entry name" value="ARM_REPEAT"/>
    <property type="match status" value="9"/>
</dbReference>
<name>CTNB1_MOUSE</name>
<evidence type="ECO:0000250" key="1"/>
<evidence type="ECO:0000250" key="2">
    <source>
        <dbReference type="UniProtKB" id="B6V8E6"/>
    </source>
</evidence>
<evidence type="ECO:0000250" key="3">
    <source>
        <dbReference type="UniProtKB" id="P35222"/>
    </source>
</evidence>
<evidence type="ECO:0000250" key="4">
    <source>
        <dbReference type="UniProtKB" id="Q96S06"/>
    </source>
</evidence>
<evidence type="ECO:0000256" key="5">
    <source>
        <dbReference type="SAM" id="MobiDB-lite"/>
    </source>
</evidence>
<evidence type="ECO:0000269" key="6">
    <source>
    </source>
</evidence>
<evidence type="ECO:0000269" key="7">
    <source>
    </source>
</evidence>
<evidence type="ECO:0000269" key="8">
    <source>
    </source>
</evidence>
<evidence type="ECO:0000269" key="9">
    <source>
    </source>
</evidence>
<evidence type="ECO:0000269" key="10">
    <source>
    </source>
</evidence>
<evidence type="ECO:0000269" key="11">
    <source>
    </source>
</evidence>
<evidence type="ECO:0000269" key="12">
    <source>
    </source>
</evidence>
<evidence type="ECO:0000269" key="13">
    <source>
    </source>
</evidence>
<evidence type="ECO:0000269" key="14">
    <source>
    </source>
</evidence>
<evidence type="ECO:0000269" key="15">
    <source>
    </source>
</evidence>
<evidence type="ECO:0000269" key="16">
    <source>
    </source>
</evidence>
<evidence type="ECO:0000269" key="17">
    <source>
    </source>
</evidence>
<evidence type="ECO:0000269" key="18">
    <source>
    </source>
</evidence>
<evidence type="ECO:0000269" key="19">
    <source>
    </source>
</evidence>
<evidence type="ECO:0000269" key="20">
    <source>
    </source>
</evidence>
<evidence type="ECO:0000269" key="21">
    <source>
    </source>
</evidence>
<evidence type="ECO:0000269" key="22">
    <source>
    </source>
</evidence>
<evidence type="ECO:0000269" key="23">
    <source>
    </source>
</evidence>
<evidence type="ECO:0000269" key="24">
    <source>
    </source>
</evidence>
<evidence type="ECO:0000269" key="25">
    <source>
    </source>
</evidence>
<evidence type="ECO:0000269" key="26">
    <source>
    </source>
</evidence>
<evidence type="ECO:0000269" key="27">
    <source>
    </source>
</evidence>
<evidence type="ECO:0000269" key="28">
    <source>
    </source>
</evidence>
<evidence type="ECO:0000269" key="29">
    <source>
    </source>
</evidence>
<evidence type="ECO:0000269" key="30">
    <source>
    </source>
</evidence>
<evidence type="ECO:0000269" key="31">
    <source>
    </source>
</evidence>
<evidence type="ECO:0000269" key="32">
    <source>
    </source>
</evidence>
<evidence type="ECO:0000269" key="33">
    <source>
    </source>
</evidence>
<evidence type="ECO:0000269" key="34">
    <source>
    </source>
</evidence>
<evidence type="ECO:0000269" key="35">
    <source>
    </source>
</evidence>
<evidence type="ECO:0000269" key="36">
    <source>
    </source>
</evidence>
<evidence type="ECO:0000269" key="37">
    <source>
    </source>
</evidence>
<evidence type="ECO:0000269" key="38">
    <source>
    </source>
</evidence>
<evidence type="ECO:0000269" key="39">
    <source>
    </source>
</evidence>
<evidence type="ECO:0000269" key="40">
    <source>
    </source>
</evidence>
<evidence type="ECO:0000269" key="41">
    <source>
    </source>
</evidence>
<evidence type="ECO:0000269" key="42">
    <source>
    </source>
</evidence>
<evidence type="ECO:0000269" key="43">
    <source>
    </source>
</evidence>
<evidence type="ECO:0000303" key="44">
    <source>
    </source>
</evidence>
<evidence type="ECO:0000305" key="45"/>
<evidence type="ECO:0000305" key="46">
    <source>
    </source>
</evidence>
<evidence type="ECO:0000312" key="47">
    <source>
        <dbReference type="MGI" id="MGI:88276"/>
    </source>
</evidence>
<evidence type="ECO:0007744" key="48">
    <source>
    </source>
</evidence>
<evidence type="ECO:0007744" key="49">
    <source>
    </source>
</evidence>
<evidence type="ECO:0007829" key="50">
    <source>
        <dbReference type="PDB" id="1DOW"/>
    </source>
</evidence>
<evidence type="ECO:0007829" key="51">
    <source>
        <dbReference type="PDB" id="1I7W"/>
    </source>
</evidence>
<evidence type="ECO:0007829" key="52">
    <source>
        <dbReference type="PDB" id="1JPP"/>
    </source>
</evidence>
<evidence type="ECO:0007829" key="53">
    <source>
        <dbReference type="PDB" id="3OUX"/>
    </source>
</evidence>
<evidence type="ECO:0007829" key="54">
    <source>
        <dbReference type="PDB" id="4EV8"/>
    </source>
</evidence>
<evidence type="ECO:0007829" key="55">
    <source>
        <dbReference type="PDB" id="4EVP"/>
    </source>
</evidence>
<evidence type="ECO:0007829" key="56">
    <source>
        <dbReference type="PDB" id="4ONS"/>
    </source>
</evidence>
<organism>
    <name type="scientific">Mus musculus</name>
    <name type="common">Mouse</name>
    <dbReference type="NCBI Taxonomy" id="10090"/>
    <lineage>
        <taxon>Eukaryota</taxon>
        <taxon>Metazoa</taxon>
        <taxon>Chordata</taxon>
        <taxon>Craniata</taxon>
        <taxon>Vertebrata</taxon>
        <taxon>Euteleostomi</taxon>
        <taxon>Mammalia</taxon>
        <taxon>Eutheria</taxon>
        <taxon>Euarchontoglires</taxon>
        <taxon>Glires</taxon>
        <taxon>Rodentia</taxon>
        <taxon>Myomorpha</taxon>
        <taxon>Muroidea</taxon>
        <taxon>Muridae</taxon>
        <taxon>Murinae</taxon>
        <taxon>Mus</taxon>
        <taxon>Mus</taxon>
    </lineage>
</organism>
<reference key="1">
    <citation type="journal article" date="1992" name="Science">
        <title>Plakoglobin and beta-catenin: distinct but closely related.</title>
        <authorList>
            <person name="Butz S."/>
            <person name="Stappert J."/>
            <person name="Weissig H."/>
            <person name="Kemler R."/>
        </authorList>
    </citation>
    <scope>NUCLEOTIDE SEQUENCE [MRNA]</scope>
</reference>
<reference key="2">
    <citation type="journal article" date="2005" name="Science">
        <title>The transcriptional landscape of the mammalian genome.</title>
        <authorList>
            <person name="Carninci P."/>
            <person name="Kasukawa T."/>
            <person name="Katayama S."/>
            <person name="Gough J."/>
            <person name="Frith M.C."/>
            <person name="Maeda N."/>
            <person name="Oyama R."/>
            <person name="Ravasi T."/>
            <person name="Lenhard B."/>
            <person name="Wells C."/>
            <person name="Kodzius R."/>
            <person name="Shimokawa K."/>
            <person name="Bajic V.B."/>
            <person name="Brenner S.E."/>
            <person name="Batalov S."/>
            <person name="Forrest A.R."/>
            <person name="Zavolan M."/>
            <person name="Davis M.J."/>
            <person name="Wilming L.G."/>
            <person name="Aidinis V."/>
            <person name="Allen J.E."/>
            <person name="Ambesi-Impiombato A."/>
            <person name="Apweiler R."/>
            <person name="Aturaliya R.N."/>
            <person name="Bailey T.L."/>
            <person name="Bansal M."/>
            <person name="Baxter L."/>
            <person name="Beisel K.W."/>
            <person name="Bersano T."/>
            <person name="Bono H."/>
            <person name="Chalk A.M."/>
            <person name="Chiu K.P."/>
            <person name="Choudhary V."/>
            <person name="Christoffels A."/>
            <person name="Clutterbuck D.R."/>
            <person name="Crowe M.L."/>
            <person name="Dalla E."/>
            <person name="Dalrymple B.P."/>
            <person name="de Bono B."/>
            <person name="Della Gatta G."/>
            <person name="di Bernardo D."/>
            <person name="Down T."/>
            <person name="Engstrom P."/>
            <person name="Fagiolini M."/>
            <person name="Faulkner G."/>
            <person name="Fletcher C.F."/>
            <person name="Fukushima T."/>
            <person name="Furuno M."/>
            <person name="Futaki S."/>
            <person name="Gariboldi M."/>
            <person name="Georgii-Hemming P."/>
            <person name="Gingeras T.R."/>
            <person name="Gojobori T."/>
            <person name="Green R.E."/>
            <person name="Gustincich S."/>
            <person name="Harbers M."/>
            <person name="Hayashi Y."/>
            <person name="Hensch T.K."/>
            <person name="Hirokawa N."/>
            <person name="Hill D."/>
            <person name="Huminiecki L."/>
            <person name="Iacono M."/>
            <person name="Ikeo K."/>
            <person name="Iwama A."/>
            <person name="Ishikawa T."/>
            <person name="Jakt M."/>
            <person name="Kanapin A."/>
            <person name="Katoh M."/>
            <person name="Kawasawa Y."/>
            <person name="Kelso J."/>
            <person name="Kitamura H."/>
            <person name="Kitano H."/>
            <person name="Kollias G."/>
            <person name="Krishnan S.P."/>
            <person name="Kruger A."/>
            <person name="Kummerfeld S.K."/>
            <person name="Kurochkin I.V."/>
            <person name="Lareau L.F."/>
            <person name="Lazarevic D."/>
            <person name="Lipovich L."/>
            <person name="Liu J."/>
            <person name="Liuni S."/>
            <person name="McWilliam S."/>
            <person name="Madan Babu M."/>
            <person name="Madera M."/>
            <person name="Marchionni L."/>
            <person name="Matsuda H."/>
            <person name="Matsuzawa S."/>
            <person name="Miki H."/>
            <person name="Mignone F."/>
            <person name="Miyake S."/>
            <person name="Morris K."/>
            <person name="Mottagui-Tabar S."/>
            <person name="Mulder N."/>
            <person name="Nakano N."/>
            <person name="Nakauchi H."/>
            <person name="Ng P."/>
            <person name="Nilsson R."/>
            <person name="Nishiguchi S."/>
            <person name="Nishikawa S."/>
            <person name="Nori F."/>
            <person name="Ohara O."/>
            <person name="Okazaki Y."/>
            <person name="Orlando V."/>
            <person name="Pang K.C."/>
            <person name="Pavan W.J."/>
            <person name="Pavesi G."/>
            <person name="Pesole G."/>
            <person name="Petrovsky N."/>
            <person name="Piazza S."/>
            <person name="Reed J."/>
            <person name="Reid J.F."/>
            <person name="Ring B.Z."/>
            <person name="Ringwald M."/>
            <person name="Rost B."/>
            <person name="Ruan Y."/>
            <person name="Salzberg S.L."/>
            <person name="Sandelin A."/>
            <person name="Schneider C."/>
            <person name="Schoenbach C."/>
            <person name="Sekiguchi K."/>
            <person name="Semple C.A."/>
            <person name="Seno S."/>
            <person name="Sessa L."/>
            <person name="Sheng Y."/>
            <person name="Shibata Y."/>
            <person name="Shimada H."/>
            <person name="Shimada K."/>
            <person name="Silva D."/>
            <person name="Sinclair B."/>
            <person name="Sperling S."/>
            <person name="Stupka E."/>
            <person name="Sugiura K."/>
            <person name="Sultana R."/>
            <person name="Takenaka Y."/>
            <person name="Taki K."/>
            <person name="Tammoja K."/>
            <person name="Tan S.L."/>
            <person name="Tang S."/>
            <person name="Taylor M.S."/>
            <person name="Tegner J."/>
            <person name="Teichmann S.A."/>
            <person name="Ueda H.R."/>
            <person name="van Nimwegen E."/>
            <person name="Verardo R."/>
            <person name="Wei C.L."/>
            <person name="Yagi K."/>
            <person name="Yamanishi H."/>
            <person name="Zabarovsky E."/>
            <person name="Zhu S."/>
            <person name="Zimmer A."/>
            <person name="Hide W."/>
            <person name="Bult C."/>
            <person name="Grimmond S.M."/>
            <person name="Teasdale R.D."/>
            <person name="Liu E.T."/>
            <person name="Brusic V."/>
            <person name="Quackenbush J."/>
            <person name="Wahlestedt C."/>
            <person name="Mattick J.S."/>
            <person name="Hume D.A."/>
            <person name="Kai C."/>
            <person name="Sasaki D."/>
            <person name="Tomaru Y."/>
            <person name="Fukuda S."/>
            <person name="Kanamori-Katayama M."/>
            <person name="Suzuki M."/>
            <person name="Aoki J."/>
            <person name="Arakawa T."/>
            <person name="Iida J."/>
            <person name="Imamura K."/>
            <person name="Itoh M."/>
            <person name="Kato T."/>
            <person name="Kawaji H."/>
            <person name="Kawagashira N."/>
            <person name="Kawashima T."/>
            <person name="Kojima M."/>
            <person name="Kondo S."/>
            <person name="Konno H."/>
            <person name="Nakano K."/>
            <person name="Ninomiya N."/>
            <person name="Nishio T."/>
            <person name="Okada M."/>
            <person name="Plessy C."/>
            <person name="Shibata K."/>
            <person name="Shiraki T."/>
            <person name="Suzuki S."/>
            <person name="Tagami M."/>
            <person name="Waki K."/>
            <person name="Watahiki A."/>
            <person name="Okamura-Oho Y."/>
            <person name="Suzuki H."/>
            <person name="Kawai J."/>
            <person name="Hayashizaki Y."/>
        </authorList>
    </citation>
    <scope>NUCLEOTIDE SEQUENCE [LARGE SCALE MRNA]</scope>
    <source>
        <strain>C57BL/6J</strain>
        <tissue>Colon</tissue>
        <tissue>Urinary bladder</tissue>
    </source>
</reference>
<reference key="3">
    <citation type="journal article" date="2004" name="Genome Res.">
        <title>The status, quality, and expansion of the NIH full-length cDNA project: the Mammalian Gene Collection (MGC).</title>
        <authorList>
            <consortium name="The MGC Project Team"/>
        </authorList>
    </citation>
    <scope>NUCLEOTIDE SEQUENCE [LARGE SCALE MRNA]</scope>
    <source>
        <strain>C57BL/6J</strain>
        <tissue>Brain</tissue>
        <tissue>Mammary cancer</tissue>
    </source>
</reference>
<reference key="4">
    <citation type="journal article" date="1994" name="FEBS Lett.">
        <title>Distinct cadherin-catenin complexes in Ca(2+)-dependent cell-cell adhesion.</title>
        <authorList>
            <person name="Butz S."/>
            <person name="Kemler R."/>
        </authorList>
    </citation>
    <scope>IDENTIFICATION IN AN E-CADHERIN/CATENIN ADHESION COMPLEX</scope>
</reference>
<reference key="5">
    <citation type="journal article" date="1998" name="Nature">
        <title>The Xenopus Wnt effector XTcf-3 interacts with Groucho-related transcriptional repressors.</title>
        <authorList>
            <person name="Roose J."/>
            <person name="Molenaar M."/>
            <person name="Peterson J."/>
            <person name="Hurenkamp J."/>
            <person name="Brantjes H."/>
            <person name="Moerer P."/>
            <person name="van de Wetering M."/>
            <person name="Destree O."/>
            <person name="Clevers H."/>
        </authorList>
    </citation>
    <scope>INTERACTION WITH TCF7; TCF7L1; TCF7L2 AND LEF1</scope>
</reference>
<reference key="6">
    <citation type="journal article" date="1999" name="Biochem. Biophys. Res. Commun.">
        <title>A GSK3beta phosphorylation site in axin modulates interaction with beta-catenin and Tcf-mediated gene expression.</title>
        <authorList>
            <person name="Jho E."/>
            <person name="Lomvardas S."/>
            <person name="Costantini F."/>
        </authorList>
    </citation>
    <scope>INTERACTION WITH AXIN1</scope>
</reference>
<reference key="7">
    <citation type="journal article" date="2000" name="Biochem. Biophys. Res. Commun.">
        <title>MAGI-1 interacts with beta-catenin and is associated with cell-cell adhesion structures.</title>
        <authorList>
            <person name="Dobrosotskaya I.Y."/>
            <person name="James G.L."/>
        </authorList>
    </citation>
    <scope>INTERACTION WITH BAIAP1</scope>
</reference>
<reference key="8">
    <citation type="journal article" date="2001" name="J. Cell Sci.">
        <title>AlphaT-catenin: a novel tissue-specific beta-catenin-binding protein mediating strong cell-cell adhesion.</title>
        <authorList>
            <person name="Janssens B."/>
            <person name="Goossens S."/>
            <person name="Staes K."/>
            <person name="Gilbert B."/>
            <person name="van Hengel J."/>
            <person name="Colpaert C."/>
            <person name="Bruyneel E."/>
            <person name="Mareel M."/>
            <person name="van Roy F."/>
        </authorList>
    </citation>
    <scope>INTERACTION WITH CTNNA3</scope>
</reference>
<reference key="9">
    <citation type="journal article" date="2002" name="Eur. J. Cell Biol.">
        <title>Loss of desmoglein 2 suggests essential functions for early embryonic development and proliferation of embryonal stem cells.</title>
        <authorList>
            <person name="Eshkind L."/>
            <person name="Tian Q."/>
            <person name="Schmidt A."/>
            <person name="Franke W.W."/>
            <person name="Windoffer R."/>
            <person name="Leube R.E."/>
        </authorList>
    </citation>
    <scope>SUBCELLULAR LOCATION</scope>
</reference>
<reference key="10">
    <citation type="journal article" date="2003" name="J. Biol. Chem.">
        <title>The PDZ protein tax-interacting protein-1 inhibits beta-catenin transcriptional activity and growth of colorectal cancer cells.</title>
        <authorList>
            <person name="Kanamori M."/>
            <person name="Sandy P."/>
            <person name="Marzinotto S."/>
            <person name="Benetti R."/>
            <person name="Kai C."/>
            <person name="Hayashizaki Y."/>
            <person name="Schneider C."/>
            <person name="Suzuki H."/>
        </authorList>
    </citation>
    <scope>INTERACTION WITH TAX1BP3</scope>
</reference>
<reference key="11">
    <citation type="journal article" date="2003" name="Mol. Cell. Biol.">
        <title>p120 Catenin-associated Fer and Fyn tyrosine kinases regulate beta-catenin Tyr-142 phosphorylation and beta-catenin-alpha-catenin Interaction.</title>
        <authorList>
            <person name="Piedra J."/>
            <person name="Miravet S."/>
            <person name="Castano J."/>
            <person name="Palmer H.G."/>
            <person name="Heisterkamp N."/>
            <person name="Garcia de Herreros A."/>
            <person name="Dunach M."/>
        </authorList>
    </citation>
    <scope>PHOSPHORYLATION AT TYR-142 BY FYN</scope>
</reference>
<reference key="12">
    <citation type="journal article" date="2003" name="Neuron">
        <title>RORalpha coordinates reciprocal signaling in cerebellar development through sonic hedgehog and calcium-dependent pathways.</title>
        <authorList>
            <person name="Gold D.A."/>
            <person name="Baek S.H."/>
            <person name="Schork N.J."/>
            <person name="Rose D.W."/>
            <person name="Larsen D.D."/>
            <person name="Sachs B.D."/>
            <person name="Rosenfeld M.G."/>
            <person name="Hamilton B.A."/>
        </authorList>
    </citation>
    <scope>INTERACTION WITH RORA</scope>
</reference>
<reference key="13">
    <citation type="journal article" date="2004" name="Biochem. Biophys. Res. Commun.">
        <title>Cyclin-dependent kinase 2 regulates the interaction of Axin with beta-catenin.</title>
        <authorList>
            <person name="Kim S.I."/>
            <person name="Park C.S."/>
            <person name="Lee M.S."/>
            <person name="Kwon M.S."/>
            <person name="Jho E.H."/>
            <person name="Song W.K."/>
        </authorList>
    </citation>
    <scope>INTERACTION WITH AXIN1</scope>
</reference>
<reference key="14">
    <citation type="journal article" date="2004" name="Genes Dev.">
        <title>Interactions between Sox9 and beta-catenin control chondrocyte differentiation.</title>
        <authorList>
            <person name="Akiyama H."/>
            <person name="Lyons J.P."/>
            <person name="Mori-Akiyama Y."/>
            <person name="Yang X."/>
            <person name="Zhang R."/>
            <person name="Zhang Z."/>
            <person name="Deng J.M."/>
            <person name="Taketo M.M."/>
            <person name="Nakamura T."/>
            <person name="Behringer R.R."/>
            <person name="McCrea P.D."/>
            <person name="de Crombrugghe B."/>
        </authorList>
    </citation>
    <scope>FUNCTION</scope>
    <scope>INTERACTION WITH SOX9</scope>
    <scope>UBIQUITINATION</scope>
</reference>
<reference key="15">
    <citation type="journal article" date="2005" name="Cell">
        <title>Deconstructing the cadherin-catenin-actin complex.</title>
        <authorList>
            <person name="Yamada S."/>
            <person name="Pokutta S."/>
            <person name="Drees F."/>
            <person name="Weis W.I."/>
            <person name="Nelson W.J."/>
        </authorList>
    </citation>
    <scope>RECONSTITUTION OF THE E-CADHERIN/CATENIN ADHESION COMPLEX</scope>
    <scope>LACK OF ACTIN-BINDING BY THE E-CADHERIN/CATENIN ADHESION COMPLEX</scope>
    <scope>FUNCTION</scope>
</reference>
<reference key="16">
    <citation type="journal article" date="2006" name="Mol. Cell">
        <title>Crystal structure of a beta-catenin/BCL9/Tcf4 complex.</title>
        <authorList>
            <person name="Sampietro J."/>
            <person name="Dahlberg C.L."/>
            <person name="Cho U.S."/>
            <person name="Hinds T.R."/>
            <person name="Kimelman D."/>
            <person name="Xu W."/>
        </authorList>
    </citation>
    <scope>INTERACTION WITH BCL9L</scope>
</reference>
<reference key="17">
    <citation type="journal article" date="2007" name="FEBS Lett.">
        <title>The Kruppel-like zinc finger protein Glis2 functions as a negative modulator of the Wnt/beta-catenin signaling pathway.</title>
        <authorList>
            <person name="Kim Y.-S."/>
            <person name="Kang H.S."/>
            <person name="Jetten A.M."/>
        </authorList>
    </citation>
    <scope>INTERACTION WITH GLIS2</scope>
    <scope>SUBCELLULAR LOCATION</scope>
</reference>
<reference key="18">
    <citation type="journal article" date="2007" name="J. Biol. Chem.">
        <title>The intercalated disc protein, mXin{alpha}, is capable of interacting with beta-catenin and bundling actin filaments.</title>
        <authorList>
            <person name="Choi S."/>
            <person name="Gustafson-Wagner E.A."/>
            <person name="Wang Q."/>
            <person name="Harlan S.M."/>
            <person name="Sinn H.W."/>
            <person name="Lin J.L.-C."/>
            <person name="Lin J.J.-C."/>
        </authorList>
    </citation>
    <scope>INTERACTION WITH XIRP1</scope>
</reference>
<reference key="19">
    <citation type="journal article" date="2007" name="Nucleic Acids Res.">
        <title>Role of GAC63 in transcriptional activation mediated by beta-catenin.</title>
        <authorList>
            <person name="Chen Y.H."/>
            <person name="Yang C.K."/>
            <person name="Xia M."/>
            <person name="Ou C.Y."/>
            <person name="Stallcup M.R."/>
        </authorList>
    </citation>
    <scope>INTERACTION WITH SLC30A9</scope>
</reference>
<reference key="20">
    <citation type="journal article" date="2007" name="Proc. Natl. Acad. Sci. U.S.A.">
        <title>Large-scale phosphorylation analysis of mouse liver.</title>
        <authorList>
            <person name="Villen J."/>
            <person name="Beausoleil S.A."/>
            <person name="Gerber S.A."/>
            <person name="Gygi S.P."/>
        </authorList>
    </citation>
    <scope>PHOSPHORYLATION [LARGE SCALE ANALYSIS] AT SER-191; SER-552 AND SER-675</scope>
    <scope>IDENTIFICATION BY MASS SPECTROMETRY [LARGE SCALE ANALYSIS]</scope>
    <source>
        <tissue>Liver</tissue>
    </source>
</reference>
<reference key="21">
    <citation type="journal article" date="2008" name="Proc. Natl. Acad. Sci. U.S.A.">
        <title>EPLIN mediates linkage of the cadherin catenin complex to F-actin and stabilizes the circumferential actin belt.</title>
        <authorList>
            <person name="Abe K."/>
            <person name="Takeichi M."/>
        </authorList>
    </citation>
    <scope>LACK OF ACTIN-BINDING BY THE E-CADHERIN/CATENIN ADHESION COMPLEX</scope>
    <scope>FUNCTION</scope>
</reference>
<reference key="22">
    <citation type="journal article" date="2009" name="EMBO J.">
        <title>The kinase TNIK is an essential activator of Wnt target genes.</title>
        <authorList>
            <person name="Mahmoudi T."/>
            <person name="Li V.S.W."/>
            <person name="Ng S.S."/>
            <person name="Taouatas N."/>
            <person name="Vries R.G.J."/>
            <person name="Mohammed S."/>
            <person name="Heck A.J."/>
            <person name="Clevers H."/>
        </authorList>
    </citation>
    <scope>INTERACTION WITH TCF7L2 AND TNIK</scope>
</reference>
<reference key="23">
    <citation type="journal article" date="2009" name="Mol. Biol. Cell">
        <title>Scribble interacts with beta-catenin to localize synaptic vesicles to synapses.</title>
        <authorList>
            <person name="Sun Y."/>
            <person name="Aiga M."/>
            <person name="Yoshida E."/>
            <person name="Humbert P.O."/>
            <person name="Bamji S.X."/>
        </authorList>
    </citation>
    <scope>INTERACTION WITH SCRIB</scope>
</reference>
<reference key="24">
    <citation type="journal article" date="2010" name="Biochem. Biophys. Res. Commun.">
        <title>Homeodomain-interacting protein kinase 2 (HIPK2) targets beta-catenin for phosphorylation and proteasomal degradation.</title>
        <authorList>
            <person name="Kim E.-A."/>
            <person name="Kim J.E."/>
            <person name="Sung K.S."/>
            <person name="Choi D.W."/>
            <person name="Lee B.J."/>
            <person name="Choi C.Y."/>
        </authorList>
    </citation>
    <scope>PHOSPHORYLATION AT SER-33 AND SER-37 BY HIPK2</scope>
    <scope>MUTAGENESIS OF SER-33 AND SER-37</scope>
</reference>
<reference key="25">
    <citation type="journal article" date="2010" name="Biochem. Biophys. Res. Commun.">
        <title>AMP-activated protein kinase (AMPK) cross-talks with canonical Wnt signaling via phosphorylation of beta-catenin at Ser 552.</title>
        <authorList>
            <person name="Zhao J."/>
            <person name="Yue W."/>
            <person name="Zhu M.J."/>
            <person name="Sreejayan N."/>
            <person name="Du M."/>
        </authorList>
    </citation>
    <scope>PHOSPHORYLATION AT SER-552</scope>
    <scope>MUTAGENESIS OF SER-552</scope>
</reference>
<reference key="26">
    <citation type="journal article" date="2010" name="Cell">
        <title>A tissue-specific atlas of mouse protein phosphorylation and expression.</title>
        <authorList>
            <person name="Huttlin E.L."/>
            <person name="Jedrychowski M.P."/>
            <person name="Elias J.E."/>
            <person name="Goswami T."/>
            <person name="Rad R."/>
            <person name="Beausoleil S.A."/>
            <person name="Villen J."/>
            <person name="Haas W."/>
            <person name="Sowa M.E."/>
            <person name="Gygi S.P."/>
        </authorList>
    </citation>
    <scope>PHOSPHORYLATION [LARGE SCALE ANALYSIS] AT SER-45; SER-191 AND SER-675</scope>
    <scope>IDENTIFICATION BY MASS SPECTROMETRY [LARGE SCALE ANALYSIS]</scope>
    <source>
        <tissue>Brain</tissue>
        <tissue>Brown adipose tissue</tissue>
        <tissue>Heart</tissue>
        <tissue>Kidney</tissue>
        <tissue>Liver</tissue>
        <tissue>Lung</tissue>
        <tissue>Pancreas</tissue>
        <tissue>Spleen</tissue>
        <tissue>Testis</tissue>
    </source>
</reference>
<reference key="27">
    <citation type="journal article" date="2010" name="J. Biol. Chem.">
        <title>The TRPV4 channel contributes to intercellular junction formation in keratinocytes.</title>
        <authorList>
            <person name="Sokabe T."/>
            <person name="Fukumi-Tominaga T."/>
            <person name="Yonemura S."/>
            <person name="Mizuno A."/>
            <person name="Tominaga M."/>
        </authorList>
    </citation>
    <scope>INTERACTION WITH TRPV4 AND CDH1</scope>
</reference>
<reference key="28">
    <citation type="journal article" date="2010" name="J. Cell Sci.">
        <title>Vinculin regulates cell-surface E-cadherin expression by binding to beta-catenin.</title>
        <authorList>
            <person name="Peng X."/>
            <person name="Cuff L.E."/>
            <person name="Lawton C.D."/>
            <person name="DeMali K.A."/>
        </authorList>
    </citation>
    <scope>INTERACTION WITH VCL</scope>
    <scope>MUTAGENESIS OF MET-8</scope>
</reference>
<reference key="29">
    <citation type="journal article" date="2000" name="Biochem. Biophys. Res. Commun.">
        <title>Regulation of beta-catenin signaling in the Wnt pathway.</title>
        <authorList>
            <person name="Kikuchi A."/>
        </authorList>
    </citation>
    <scope>REVIEW</scope>
</reference>
<reference key="30">
    <citation type="journal article" date="2010" name="Mol. Cell">
        <title>S-nitrosylation of beta-catenin by eNOS-derived NO promotes VEGF-induced endothelial cell permeability.</title>
        <authorList>
            <person name="Thibeault S."/>
            <person name="Rautureau Y."/>
            <person name="Oubaha M."/>
            <person name="Faubert D."/>
            <person name="Wilkes B.C."/>
            <person name="Delisle C."/>
            <person name="Gratton J.P."/>
        </authorList>
    </citation>
    <scope>S-NITROSYLATION AT CYS-619</scope>
    <scope>SUBCELLULAR LOCATION</scope>
</reference>
<reference key="31">
    <citation type="journal article" date="2011" name="J. Neurosci.">
        <title>Frizzled3 is required for neurogenesis and target innervation during sympathetic nervous system development.</title>
        <authorList>
            <person name="Armstrong A."/>
            <person name="Ryu Y.K."/>
            <person name="Chieco D."/>
            <person name="Kuruvilla R."/>
        </authorList>
    </citation>
    <scope>FUNCTION</scope>
    <scope>DISRUPTION PHENOTYPE</scope>
    <scope>CONDITIONAL KNOCKOUT</scope>
</reference>
<reference key="32">
    <citation type="journal article" date="2011" name="Nat. Med.">
        <title>Defective Wnt-dependent cerebellar midline fusion in a mouse model of Joubert syndrome.</title>
        <authorList>
            <person name="Lancaster M.A."/>
            <person name="Gopal D.J."/>
            <person name="Kim J."/>
            <person name="Saleem S.N."/>
            <person name="Silhavy J.L."/>
            <person name="Louie C.M."/>
            <person name="Thacker B.E."/>
            <person name="Williams Y."/>
            <person name="Zaki M.S."/>
            <person name="Gleeson J.G."/>
        </authorList>
    </citation>
    <scope>SUBCELLULAR LOCATION</scope>
    <scope>TISSUE SPECIFICITY</scope>
</reference>
<reference key="33">
    <citation type="journal article" date="2012" name="EMBO J.">
        <title>Nuclear receptor binding protein 1 regulates intestinal progenitor cell homeostasis and tumour formation.</title>
        <authorList>
            <person name="Wilson C.H."/>
            <person name="Crombie C."/>
            <person name="van der Weyden L."/>
            <person name="Poulogiannis G."/>
            <person name="Rust A.G."/>
            <person name="Pardo M."/>
            <person name="Gracia T."/>
            <person name="Yu L."/>
            <person name="Choudhary J."/>
            <person name="Poulin G.B."/>
            <person name="McIntyre R.E."/>
            <person name="Winton D.J."/>
            <person name="March H.N."/>
            <person name="Arends M.J."/>
            <person name="Fraser A.G."/>
            <person name="Adams D.J."/>
        </authorList>
    </citation>
    <scope>TISSUE SPECIFICITY</scope>
</reference>
<reference key="34">
    <citation type="journal article" date="2014" name="J. Neurosci.">
        <title>Dlg5 regulates dendritic spine formation and synaptogenesis by controlling subcellular N-cadherin localization.</title>
        <authorList>
            <person name="Wang S.H."/>
            <person name="Celic I."/>
            <person name="Choi S.Y."/>
            <person name="Riccomagno M."/>
            <person name="Wang Q."/>
            <person name="Sun L.O."/>
            <person name="Mitchell S.P."/>
            <person name="Vasioukhin V."/>
            <person name="Huganir R.L."/>
            <person name="Kolodkin A.L."/>
        </authorList>
    </citation>
    <scope>SUBCELLULAR LOCATION</scope>
    <scope>INTERACTION WITH DLG5</scope>
</reference>
<reference key="35">
    <citation type="journal article" date="2015" name="Bone">
        <title>Transmembrane protein 64 reciprocally regulates osteoblast and adipocyte differentiation by modulating Wnt/beta-catenin signaling.</title>
        <authorList>
            <person name="Jeong B.C."/>
            <person name="Kim T.S."/>
            <person name="Kim H.S."/>
            <person name="Lee S.H."/>
            <person name="Choi Y."/>
        </authorList>
    </citation>
    <scope>SUBCELLULAR LOCATION</scope>
</reference>
<reference key="36">
    <citation type="journal article" date="2016" name="J. Invest. Dermatol.">
        <title>Antagonistic Regulation of Intercellular Cohesion by Plakophilins 1 and 3.</title>
        <authorList>
            <person name="Keil R."/>
            <person name="Rietscher K."/>
            <person name="Hatzfeld M."/>
        </authorList>
    </citation>
    <scope>SUBCELLULAR LOCATION</scope>
</reference>
<reference key="37">
    <citation type="journal article" date="2016" name="PLoS ONE">
        <title>Plakophilin-1, a Novel Wnt Signaling Regulator, Is Critical for Tooth Development and Ameloblast Differentiation.</title>
        <authorList>
            <person name="Miyazaki K."/>
            <person name="Yoshizaki K."/>
            <person name="Arai C."/>
            <person name="Yamada A."/>
            <person name="Saito K."/>
            <person name="Ishikawa M."/>
            <person name="Xue H."/>
            <person name="Funada K."/>
            <person name="Haruyama N."/>
            <person name="Yamada Y."/>
            <person name="Fukumoto S."/>
            <person name="Takahashi I."/>
        </authorList>
    </citation>
    <scope>SUBCELLULAR LOCATION</scope>
    <scope>TISSUE SPECIFICITY</scope>
    <scope>DEVELOPMENTAL STAGE</scope>
</reference>
<reference key="38">
    <citation type="journal article" date="2018" name="Eur. J. Oral Sci.">
        <title>Homeobox protein MSX-1 inhibits expression of bone morphogenetic protein 2, bone morphogenetic protein 4, and lymphoid enhancer-binding factor 1 via Wnt/beta-catenin signaling to prevent differentiation of dental mesenchymal cells during the late bell stage.</title>
        <authorList>
            <person name="Feng X.Y."/>
            <person name="Wu X.S."/>
            <person name="Wang J.S."/>
            <person name="Zhang C.M."/>
            <person name="Wang S.L."/>
        </authorList>
    </citation>
    <scope>FUNCTION</scope>
    <scope>DEVELOPMENTAL STAGE</scope>
</reference>
<reference key="39">
    <citation type="journal article" date="2018" name="Nat. Commun.">
        <title>ARTS mediates apoptosis and regeneration of the intestinal stem cell niche.</title>
        <authorList>
            <person name="Koren E."/>
            <person name="Yosefzon Y."/>
            <person name="Ankawa R."/>
            <person name="Soteriou D."/>
            <person name="Jacob A."/>
            <person name="Nevelsky A."/>
            <person name="Ben-Yosef R."/>
            <person name="Bar-Sela G."/>
            <person name="Fuchs Y."/>
        </authorList>
    </citation>
    <scope>SUBCELLULAR LOCATION</scope>
</reference>
<reference key="40">
    <citation type="journal article" date="2019" name="Science">
        <title>LMBR1L regulates lymphopoiesis through Wnt/beta-catenin signaling.</title>
        <authorList>
            <person name="Choi J.H."/>
            <person name="Zhong X."/>
            <person name="McAlpine W."/>
            <person name="Liao T.C."/>
            <person name="Zhang D."/>
            <person name="Fang B."/>
            <person name="Russell J."/>
            <person name="Ludwig S."/>
            <person name="Nair-Gill E."/>
            <person name="Zhang Z."/>
            <person name="Wang K.W."/>
            <person name="Misawa T."/>
            <person name="Zhan X."/>
            <person name="Choi M."/>
            <person name="Wang T."/>
            <person name="Li X."/>
            <person name="Tang M."/>
            <person name="Sun Q."/>
            <person name="Yu L."/>
            <person name="Murray A.R."/>
            <person name="Moresco E.M.Y."/>
            <person name="Beutler B."/>
        </authorList>
    </citation>
    <scope>INTERACTION WITH LMBR1L AND AMFR</scope>
</reference>
<reference key="41">
    <citation type="journal article" date="2020" name="Nat. Commun.">
        <title>ADNP promotes neural differentiation by modulating Wnt/beta-catenin signaling.</title>
        <authorList>
            <person name="Sun X."/>
            <person name="Peng X."/>
            <person name="Cao Y."/>
            <person name="Zhou Y."/>
            <person name="Sun Y."/>
        </authorList>
    </citation>
    <scope>INTERACTION WITH ADNP</scope>
</reference>
<reference key="42">
    <citation type="journal article" date="1997" name="Cell">
        <title>Three-dimensional structure of the armadillo repeat region of beta-catenin.</title>
        <authorList>
            <person name="Huber A.H."/>
            <person name="Nelson W.J."/>
            <person name="Weis W.I."/>
        </authorList>
    </citation>
    <scope>X-RAY CRYSTALLOGRAPHY (2.9 ANGSTROMS) OF 150-665</scope>
</reference>
<reference key="43">
    <citation type="journal article" date="2000" name="Mol. Cell">
        <title>Structure of the dimerization and beta-catenin-binding region of alpha-catenin.</title>
        <authorList>
            <person name="Pokutta S."/>
            <person name="Weis W.I."/>
        </authorList>
    </citation>
    <scope>X-RAY CRYSTALLOGRAPHY (3.0 ANGSTROMS) OF 118-149 IN COMPLEX WITH CTNNA1</scope>
</reference>
<reference key="44">
    <citation type="journal article" date="2001" name="Cell">
        <title>The structure of the beta-catenin/E-cadherin complex and the molecular basis of diverse ligand recognition by beta-catenin.</title>
        <authorList>
            <person name="Huber A.H."/>
            <person name="Weis W.I."/>
        </authorList>
    </citation>
    <scope>X-RAY CRYSTALLOGRAPHY (2.0 AND 3.0 ANGSTROMS) OF 134-671 IN COMPLEX WITH PHOSPHORYLATED AND UNPHOSPHORYLATED CDH1</scope>
</reference>
<reference key="45">
    <citation type="journal article" date="2001" name="EMBO J.">
        <title>Molecular mechanisms of beta-catenin recognition by adenomatous polyposis coli revealed by the structure of an APC-beta-catenin complex.</title>
        <authorList>
            <person name="Eklof Spink K."/>
            <person name="Fridman S.G."/>
            <person name="Weis W.I."/>
        </authorList>
    </citation>
    <scope>X-RAY CRYSTALLOGRAPHY (3.1 ANGSTROMS) OF 134-671 IN COMPLEX WITH APC</scope>
</reference>
<reference key="46">
    <citation type="journal article" date="2002" name="Mol. Cell">
        <title>ICAT inhibits beta-catenin binding to Tcf/Lef-family transcription factors and the general coactivator p300 using independent structural modules.</title>
        <authorList>
            <person name="Daniels D.L."/>
            <person name="Weis W.I."/>
        </authorList>
    </citation>
    <scope>X-RAY CRYSTALLOGRAPHY (2.1 ANGSTROMS) OF 134-671 IN COMPLEX WITH CTNNBIP1</scope>
    <scope>INTERACTION WITH EP300</scope>
</reference>
<sequence length="781" mass="85471">MATQADLMELDMAMEPDRKAAVSHWQQQSYLDSGIHSGATTTAPSLSGKGNPEEEDVDTSQVLYEWEQGFSQSFTQEQVADIDGQYAMTRAQRVRAAMFPETLDEGMQIPSTQFDAAHPTNVQRLAEPSQMLKHAVVNLINYQDDAELATRAIPELTKLLNDEDQVVVNKAAVMVHQLSKKEASRHAIMRSPQMVSAIVRTMQNTNDVETARCTAGTLHNLSHHREGLLAIFKSGGIPALVKMLGSPVDSVLFYAITTLHNLLLHQEGAKMAVRLAGGLQKMVALLNKTNVKFLAITTDCLQILAYGNQESKLIILASGGPQALVNIMRTYTYEKLLWTTSRVLKVLSVCSSNKPAIVEAGGMQALGLHLTDPSQRLVQNCLWTLRNLSDAATKQEGMEGLLGTLVQLLGSDDINVVTCAAGILSNLTCNNYKNKMMVCQVGGIEALVRTVLRAGDREDITEPAICALRHLTSRHQEAEMAQNAVRLHYGLPVVVKLLHPPSHWPLIKATVGLIRNLALCPANHAPLREQGAIPRLVQLLVRAHQDTQRRTSMGGTQQQFVEGVRMEEIVEGCTGALHILARDVHNRIVIRGLNTIPLFVQLLYSPIENIQRVAAGVLCELAQDKEAAEAIEAEGATAPLTELLHSRNEGVATYAAAVLFRMSEDKPQDYKKRLSVELTSSLFRTEPMAWNETADLGLDIGAQGEALGYRQDDPSYRSFHSGGYGQDALGMDPMMEHEMGGHHPGADYPVDGLPDLGHAQDLMDGLPPGDSNQLAWFDTDL</sequence>
<protein>
    <recommendedName>
        <fullName evidence="47">Catenin beta-1</fullName>
    </recommendedName>
    <alternativeName>
        <fullName evidence="44">Beta-catenin</fullName>
    </alternativeName>
</protein>